<keyword id="KW-0002">3D-structure</keyword>
<keyword id="KW-0025">Alternative splicing</keyword>
<keyword id="KW-0091">Biomineralization</keyword>
<keyword id="KW-0963">Cytoplasm</keyword>
<keyword id="KW-0507">mRNA processing</keyword>
<keyword id="KW-0508">mRNA splicing</keyword>
<keyword id="KW-0539">Nucleus</keyword>
<keyword id="KW-0597">Phosphoprotein</keyword>
<keyword id="KW-1267">Proteomics identification</keyword>
<keyword id="KW-1185">Reference proteome</keyword>
<keyword id="KW-0747">Spliceosome</keyword>
<evidence type="ECO:0000250" key="1"/>
<evidence type="ECO:0000250" key="2">
    <source>
        <dbReference type="UniProtKB" id="Q5U2Y6"/>
    </source>
</evidence>
<evidence type="ECO:0000255" key="3">
    <source>
        <dbReference type="PROSITE-ProRule" id="PRU00092"/>
    </source>
</evidence>
<evidence type="ECO:0000256" key="4">
    <source>
        <dbReference type="SAM" id="MobiDB-lite"/>
    </source>
</evidence>
<evidence type="ECO:0000269" key="5">
    <source>
    </source>
</evidence>
<evidence type="ECO:0000269" key="6">
    <source>
    </source>
</evidence>
<evidence type="ECO:0000269" key="7">
    <source>
    </source>
</evidence>
<evidence type="ECO:0000303" key="8">
    <source>
    </source>
</evidence>
<evidence type="ECO:0000305" key="9"/>
<evidence type="ECO:0007744" key="10">
    <source>
    </source>
</evidence>
<evidence type="ECO:0007744" key="11">
    <source>
    </source>
</evidence>
<evidence type="ECO:0007744" key="12">
    <source>
    </source>
</evidence>
<evidence type="ECO:0007744" key="13">
    <source>
    </source>
</evidence>
<evidence type="ECO:0007744" key="14">
    <source>
    </source>
</evidence>
<evidence type="ECO:0007744" key="15">
    <source>
    </source>
</evidence>
<dbReference type="EMBL" id="AF070662">
    <property type="protein sequence ID" value="AAD20968.1"/>
    <property type="molecule type" value="mRNA"/>
</dbReference>
<dbReference type="EMBL" id="AL080147">
    <property type="protein sequence ID" value="CAB45740.1"/>
    <property type="molecule type" value="mRNA"/>
</dbReference>
<dbReference type="EMBL" id="AL050258">
    <property type="protein sequence ID" value="CAB43360.1"/>
    <property type="molecule type" value="mRNA"/>
</dbReference>
<dbReference type="EMBL" id="BT007274">
    <property type="protein sequence ID" value="AAP35938.1"/>
    <property type="molecule type" value="mRNA"/>
</dbReference>
<dbReference type="EMBL" id="CT841511">
    <property type="protein sequence ID" value="CAJ86441.1"/>
    <property type="molecule type" value="mRNA"/>
</dbReference>
<dbReference type="EMBL" id="Z95115">
    <property type="protein sequence ID" value="CAI17979.1"/>
    <property type="molecule type" value="Genomic_DNA"/>
</dbReference>
<dbReference type="EMBL" id="Z99714">
    <property type="protein sequence ID" value="CAI17979.1"/>
    <property type="status" value="JOINED"/>
    <property type="molecule type" value="Genomic_DNA"/>
</dbReference>
<dbReference type="EMBL" id="Z99714">
    <property type="protein sequence ID" value="CAI17878.1"/>
    <property type="molecule type" value="Genomic_DNA"/>
</dbReference>
<dbReference type="EMBL" id="Z95115">
    <property type="protein sequence ID" value="CAI17878.1"/>
    <property type="status" value="JOINED"/>
    <property type="molecule type" value="Genomic_DNA"/>
</dbReference>
<dbReference type="EMBL" id="CH471095">
    <property type="protein sequence ID" value="EAW59723.1"/>
    <property type="molecule type" value="Genomic_DNA"/>
</dbReference>
<dbReference type="EMBL" id="BC011599">
    <property type="protein sequence ID" value="AAH11599.1"/>
    <property type="molecule type" value="mRNA"/>
</dbReference>
<dbReference type="CCDS" id="CCDS13838.1">
    <molecule id="Q9UBB9-1"/>
</dbReference>
<dbReference type="PIR" id="T12531">
    <property type="entry name" value="T12531"/>
</dbReference>
<dbReference type="RefSeq" id="NP_001008697.1">
    <molecule id="Q9UBB9-1"/>
    <property type="nucleotide sequence ID" value="NM_001008697.3"/>
</dbReference>
<dbReference type="RefSeq" id="NP_001333786.1">
    <molecule id="Q9UBB9-1"/>
    <property type="nucleotide sequence ID" value="NM_001346857.2"/>
</dbReference>
<dbReference type="RefSeq" id="NP_001333787.1">
    <molecule id="Q9UBB9-1"/>
    <property type="nucleotide sequence ID" value="NM_001346858.2"/>
</dbReference>
<dbReference type="RefSeq" id="NP_001333788.1">
    <molecule id="Q9UBB9-1"/>
    <property type="nucleotide sequence ID" value="NM_001346859.2"/>
</dbReference>
<dbReference type="RefSeq" id="NP_001333790.1">
    <molecule id="Q9UBB9-1"/>
    <property type="nucleotide sequence ID" value="NM_001346861.2"/>
</dbReference>
<dbReference type="RefSeq" id="NP_036275.1">
    <molecule id="Q9UBB9-1"/>
    <property type="nucleotide sequence ID" value="NM_012143.4"/>
</dbReference>
<dbReference type="RefSeq" id="XP_011528381.1">
    <property type="nucleotide sequence ID" value="XM_011530079.1"/>
</dbReference>
<dbReference type="RefSeq" id="XP_016884224.1">
    <property type="nucleotide sequence ID" value="XM_017028735.1"/>
</dbReference>
<dbReference type="PDB" id="8RO2">
    <property type="method" value="EM"/>
    <property type="resolution" value="3.50 A"/>
    <property type="chains" value="TF=1-837"/>
</dbReference>
<dbReference type="PDBsum" id="8RO2"/>
<dbReference type="EMDB" id="EMD-19399"/>
<dbReference type="SMR" id="Q9UBB9"/>
<dbReference type="BioGRID" id="117294">
    <property type="interactions" value="447"/>
</dbReference>
<dbReference type="CORUM" id="Q9UBB9"/>
<dbReference type="FunCoup" id="Q9UBB9">
    <property type="interactions" value="3163"/>
</dbReference>
<dbReference type="IntAct" id="Q9UBB9">
    <property type="interactions" value="326"/>
</dbReference>
<dbReference type="MINT" id="Q9UBB9"/>
<dbReference type="STRING" id="9606.ENSP00000384421"/>
<dbReference type="GlyGen" id="Q9UBB9">
    <property type="glycosylation" value="1 site, 1 O-linked glycan (1 site)"/>
</dbReference>
<dbReference type="iPTMnet" id="Q9UBB9"/>
<dbReference type="MetOSite" id="Q9UBB9"/>
<dbReference type="PhosphoSitePlus" id="Q9UBB9"/>
<dbReference type="BioMuta" id="TFIP11"/>
<dbReference type="DMDM" id="22096235"/>
<dbReference type="jPOST" id="Q9UBB9"/>
<dbReference type="MassIVE" id="Q9UBB9"/>
<dbReference type="PaxDb" id="9606-ENSP00000384421"/>
<dbReference type="PeptideAtlas" id="Q9UBB9"/>
<dbReference type="ProteomicsDB" id="83928">
    <molecule id="Q9UBB9-1"/>
</dbReference>
<dbReference type="ProteomicsDB" id="83929">
    <molecule id="Q9UBB9-2"/>
</dbReference>
<dbReference type="Pumba" id="Q9UBB9"/>
<dbReference type="Antibodypedia" id="9983">
    <property type="antibodies" value="127 antibodies from 21 providers"/>
</dbReference>
<dbReference type="DNASU" id="24144"/>
<dbReference type="Ensembl" id="ENST00000405938.5">
    <molecule id="Q9UBB9-1"/>
    <property type="protein sequence ID" value="ENSP00000384297.1"/>
    <property type="gene ID" value="ENSG00000100109.17"/>
</dbReference>
<dbReference type="Ensembl" id="ENST00000407148.5">
    <molecule id="Q9UBB9-1"/>
    <property type="protein sequence ID" value="ENSP00000385861.1"/>
    <property type="gene ID" value="ENSG00000100109.17"/>
</dbReference>
<dbReference type="Ensembl" id="ENST00000407431.5">
    <molecule id="Q9UBB9-1"/>
    <property type="protein sequence ID" value="ENSP00000383892.1"/>
    <property type="gene ID" value="ENSG00000100109.17"/>
</dbReference>
<dbReference type="Ensembl" id="ENST00000407690.6">
    <molecule id="Q9UBB9-1"/>
    <property type="protein sequence ID" value="ENSP00000384421.1"/>
    <property type="gene ID" value="ENSG00000100109.17"/>
</dbReference>
<dbReference type="Ensembl" id="ENST00000619735.4">
    <molecule id="Q9UBB9-1"/>
    <property type="protein sequence ID" value="ENSP00000480171.1"/>
    <property type="gene ID" value="ENSG00000100109.17"/>
</dbReference>
<dbReference type="GeneID" id="24144"/>
<dbReference type="KEGG" id="hsa:24144"/>
<dbReference type="MANE-Select" id="ENST00000407690.6">
    <property type="protein sequence ID" value="ENSP00000384421.1"/>
    <property type="RefSeq nucleotide sequence ID" value="NM_012143.4"/>
    <property type="RefSeq protein sequence ID" value="NP_036275.1"/>
</dbReference>
<dbReference type="UCSC" id="uc003acr.4">
    <molecule id="Q9UBB9-1"/>
    <property type="organism name" value="human"/>
</dbReference>
<dbReference type="AGR" id="HGNC:17165"/>
<dbReference type="CTD" id="24144"/>
<dbReference type="DisGeNET" id="24144"/>
<dbReference type="GeneCards" id="TFIP11"/>
<dbReference type="HGNC" id="HGNC:17165">
    <property type="gene designation" value="TFIP11"/>
</dbReference>
<dbReference type="HPA" id="ENSG00000100109">
    <property type="expression patterns" value="Low tissue specificity"/>
</dbReference>
<dbReference type="MIM" id="612747">
    <property type="type" value="gene"/>
</dbReference>
<dbReference type="neXtProt" id="NX_Q9UBB9"/>
<dbReference type="OpenTargets" id="ENSG00000100109"/>
<dbReference type="PharmGKB" id="PA38441"/>
<dbReference type="VEuPathDB" id="HostDB:ENSG00000100109"/>
<dbReference type="eggNOG" id="KOG2184">
    <property type="taxonomic scope" value="Eukaryota"/>
</dbReference>
<dbReference type="GeneTree" id="ENSGT00390000012739"/>
<dbReference type="HOGENOM" id="CLU_007977_1_1_1"/>
<dbReference type="InParanoid" id="Q9UBB9"/>
<dbReference type="OMA" id="CEQDIIQ"/>
<dbReference type="OrthoDB" id="4822at2759"/>
<dbReference type="PAN-GO" id="Q9UBB9">
    <property type="GO annotations" value="2 GO annotations based on evolutionary models"/>
</dbReference>
<dbReference type="PhylomeDB" id="Q9UBB9"/>
<dbReference type="TreeFam" id="TF314887"/>
<dbReference type="PathwayCommons" id="Q9UBB9"/>
<dbReference type="Reactome" id="R-HSA-72163">
    <property type="pathway name" value="mRNA Splicing - Major Pathway"/>
</dbReference>
<dbReference type="SignaLink" id="Q9UBB9"/>
<dbReference type="BioGRID-ORCS" id="24144">
    <property type="hits" value="691 hits in 1158 CRISPR screens"/>
</dbReference>
<dbReference type="ChiTaRS" id="TFIP11">
    <property type="organism name" value="human"/>
</dbReference>
<dbReference type="GeneWiki" id="TFIP11"/>
<dbReference type="GenomeRNAi" id="24144"/>
<dbReference type="Pharos" id="Q9UBB9">
    <property type="development level" value="Tbio"/>
</dbReference>
<dbReference type="PRO" id="PR:Q9UBB9"/>
<dbReference type="Proteomes" id="UP000005640">
    <property type="component" value="Chromosome 22"/>
</dbReference>
<dbReference type="RNAct" id="Q9UBB9">
    <property type="molecule type" value="protein"/>
</dbReference>
<dbReference type="Bgee" id="ENSG00000100109">
    <property type="expression patterns" value="Expressed in granulocyte and 184 other cell types or tissues"/>
</dbReference>
<dbReference type="ExpressionAtlas" id="Q9UBB9">
    <property type="expression patterns" value="baseline and differential"/>
</dbReference>
<dbReference type="GO" id="GO:0071013">
    <property type="term" value="C:catalytic step 2 spliceosome"/>
    <property type="evidence" value="ECO:0000314"/>
    <property type="project" value="UniProtKB"/>
</dbReference>
<dbReference type="GO" id="GO:0000781">
    <property type="term" value="C:chromosome, telomeric region"/>
    <property type="evidence" value="ECO:0000314"/>
    <property type="project" value="BHF-UCL"/>
</dbReference>
<dbReference type="GO" id="GO:0005737">
    <property type="term" value="C:cytoplasm"/>
    <property type="evidence" value="ECO:0007669"/>
    <property type="project" value="UniProtKB-SubCell"/>
</dbReference>
<dbReference type="GO" id="GO:0031012">
    <property type="term" value="C:extracellular matrix"/>
    <property type="evidence" value="ECO:0007669"/>
    <property type="project" value="Ensembl"/>
</dbReference>
<dbReference type="GO" id="GO:0016607">
    <property type="term" value="C:nuclear speck"/>
    <property type="evidence" value="ECO:0000314"/>
    <property type="project" value="LIFEdb"/>
</dbReference>
<dbReference type="GO" id="GO:0005730">
    <property type="term" value="C:nucleolus"/>
    <property type="evidence" value="ECO:0000314"/>
    <property type="project" value="BHF-UCL"/>
</dbReference>
<dbReference type="GO" id="GO:0005654">
    <property type="term" value="C:nucleoplasm"/>
    <property type="evidence" value="ECO:0000304"/>
    <property type="project" value="Reactome"/>
</dbReference>
<dbReference type="GO" id="GO:0005681">
    <property type="term" value="C:spliceosomal complex"/>
    <property type="evidence" value="ECO:0000314"/>
    <property type="project" value="UniProtKB"/>
</dbReference>
<dbReference type="GO" id="GO:0071008">
    <property type="term" value="C:U2-type post-mRNA release spliceosomal complex"/>
    <property type="evidence" value="ECO:0000314"/>
    <property type="project" value="UniProtKB"/>
</dbReference>
<dbReference type="GO" id="GO:0003676">
    <property type="term" value="F:nucleic acid binding"/>
    <property type="evidence" value="ECO:0007669"/>
    <property type="project" value="InterPro"/>
</dbReference>
<dbReference type="GO" id="GO:0031214">
    <property type="term" value="P:biomineral tissue development"/>
    <property type="evidence" value="ECO:0007669"/>
    <property type="project" value="UniProtKB-KW"/>
</dbReference>
<dbReference type="GO" id="GO:0000398">
    <property type="term" value="P:mRNA splicing, via spliceosome"/>
    <property type="evidence" value="ECO:0000305"/>
    <property type="project" value="UniProtKB"/>
</dbReference>
<dbReference type="GO" id="GO:2001033">
    <property type="term" value="P:negative regulation of double-strand break repair via nonhomologous end joining"/>
    <property type="evidence" value="ECO:0000250"/>
    <property type="project" value="BHF-UCL"/>
</dbReference>
<dbReference type="GO" id="GO:0031333">
    <property type="term" value="P:negative regulation of protein-containing complex assembly"/>
    <property type="evidence" value="ECO:0000314"/>
    <property type="project" value="BHF-UCL"/>
</dbReference>
<dbReference type="GO" id="GO:0031848">
    <property type="term" value="P:protection from non-homologous end joining at telomere"/>
    <property type="evidence" value="ECO:0000305"/>
    <property type="project" value="BHF-UCL"/>
</dbReference>
<dbReference type="GO" id="GO:0006396">
    <property type="term" value="P:RNA processing"/>
    <property type="evidence" value="ECO:0000305"/>
    <property type="project" value="UniProtKB"/>
</dbReference>
<dbReference type="GO" id="GO:0000390">
    <property type="term" value="P:spliceosomal complex disassembly"/>
    <property type="evidence" value="ECO:0000315"/>
    <property type="project" value="UniProtKB"/>
</dbReference>
<dbReference type="InterPro" id="IPR000467">
    <property type="entry name" value="G_patch_dom"/>
</dbReference>
<dbReference type="InterPro" id="IPR022783">
    <property type="entry name" value="GCFC_dom"/>
</dbReference>
<dbReference type="InterPro" id="IPR022159">
    <property type="entry name" value="STIP/TFIP11_N"/>
</dbReference>
<dbReference type="InterPro" id="IPR024933">
    <property type="entry name" value="TFP11"/>
</dbReference>
<dbReference type="InterPro" id="IPR045211">
    <property type="entry name" value="TFP11/STIP/Ntr1"/>
</dbReference>
<dbReference type="PANTHER" id="PTHR23329:SF1">
    <property type="entry name" value="TUFTELIN-INTERACTING PROTEIN 11"/>
    <property type="match status" value="1"/>
</dbReference>
<dbReference type="PANTHER" id="PTHR23329">
    <property type="entry name" value="TUFTELIN-INTERACTING PROTEIN 11-RELATED"/>
    <property type="match status" value="1"/>
</dbReference>
<dbReference type="Pfam" id="PF01585">
    <property type="entry name" value="G-patch"/>
    <property type="match status" value="1"/>
</dbReference>
<dbReference type="Pfam" id="PF07842">
    <property type="entry name" value="GCFC"/>
    <property type="match status" value="1"/>
</dbReference>
<dbReference type="Pfam" id="PF12457">
    <property type="entry name" value="TIP_N"/>
    <property type="match status" value="1"/>
</dbReference>
<dbReference type="PIRSF" id="PIRSF017706">
    <property type="entry name" value="TFIP11"/>
    <property type="match status" value="1"/>
</dbReference>
<dbReference type="SMART" id="SM00443">
    <property type="entry name" value="G_patch"/>
    <property type="match status" value="1"/>
</dbReference>
<dbReference type="PROSITE" id="PS50174">
    <property type="entry name" value="G_PATCH"/>
    <property type="match status" value="1"/>
</dbReference>
<proteinExistence type="evidence at protein level"/>
<feature type="chain" id="PRO_0000072501" description="Tuftelin-interacting protein 11">
    <location>
        <begin position="1"/>
        <end position="837"/>
    </location>
</feature>
<feature type="domain" description="G-patch" evidence="3">
    <location>
        <begin position="149"/>
        <end position="195"/>
    </location>
</feature>
<feature type="region of interest" description="Required for interaction with DHX15" evidence="6">
    <location>
        <begin position="1"/>
        <end position="50"/>
    </location>
</feature>
<feature type="region of interest" description="Disordered" evidence="4">
    <location>
        <begin position="1"/>
        <end position="21"/>
    </location>
</feature>
<feature type="region of interest" description="Disordered" evidence="4">
    <location>
        <begin position="53"/>
        <end position="72"/>
    </location>
</feature>
<feature type="region of interest" description="Disordered" evidence="4">
    <location>
        <begin position="85"/>
        <end position="133"/>
    </location>
</feature>
<feature type="region of interest" description="Disordered" evidence="4">
    <location>
        <begin position="179"/>
        <end position="236"/>
    </location>
</feature>
<feature type="region of interest" description="Required for nuclear speckle localization" evidence="1">
    <location>
        <begin position="710"/>
        <end position="734"/>
    </location>
</feature>
<feature type="short sequence motif" description="Nuclear localization signal" evidence="1">
    <location>
        <begin position="700"/>
        <end position="705"/>
    </location>
</feature>
<feature type="compositionally biased region" description="Basic and acidic residues" evidence="4">
    <location>
        <begin position="1"/>
        <end position="13"/>
    </location>
</feature>
<feature type="compositionally biased region" description="Basic and acidic residues" evidence="4">
    <location>
        <begin position="53"/>
        <end position="64"/>
    </location>
</feature>
<feature type="compositionally biased region" description="Acidic residues" evidence="4">
    <location>
        <begin position="91"/>
        <end position="102"/>
    </location>
</feature>
<feature type="compositionally biased region" description="Basic and acidic residues" evidence="4">
    <location>
        <begin position="103"/>
        <end position="116"/>
    </location>
</feature>
<feature type="compositionally biased region" description="Basic and acidic residues" evidence="4">
    <location>
        <begin position="217"/>
        <end position="231"/>
    </location>
</feature>
<feature type="modified residue" description="Phosphoserine" evidence="2">
    <location>
        <position position="2"/>
    </location>
</feature>
<feature type="modified residue" description="Phosphoserine" evidence="13 15">
    <location>
        <position position="59"/>
    </location>
</feature>
<feature type="modified residue" description="Phosphoserine" evidence="10 13 14 15">
    <location>
        <position position="98"/>
    </location>
</feature>
<feature type="modified residue" description="Phosphoserine" evidence="13">
    <location>
        <position position="144"/>
    </location>
</feature>
<feature type="modified residue" description="Phosphoserine" evidence="11 12 14 15">
    <location>
        <position position="210"/>
    </location>
</feature>
<feature type="splice variant" id="VSP_003998" description="In isoform 2." evidence="8">
    <location>
        <begin position="1"/>
        <end position="641"/>
    </location>
</feature>
<feature type="splice variant" id="VSP_003999" description="In isoform 2." evidence="8">
    <original>EGMISVSSLVGLLEKHFFPKWL</original>
    <variation>MATSEILPSFVATMDASNFSFW</variation>
    <location>
        <begin position="642"/>
        <end position="663"/>
    </location>
</feature>
<feature type="sequence variant" id="VAR_054069" description="In dbSNP:rs6005062.">
    <original>N</original>
    <variation>S</variation>
    <location>
        <position position="177"/>
    </location>
</feature>
<reference key="1">
    <citation type="journal article" date="2000" name="Genome Res.">
        <title>Cloning and functional analysis of cDNAs with open reading frames for 300 previously undefined genes expressed in CD34+ hematopoietic stem/progenitor cells.</title>
        <authorList>
            <person name="Zhang Q.-H."/>
            <person name="Ye M."/>
            <person name="Wu X.-Y."/>
            <person name="Ren S.-X."/>
            <person name="Zhao M."/>
            <person name="Zhao C.-J."/>
            <person name="Fu G."/>
            <person name="Shen Y."/>
            <person name="Fan H.-Y."/>
            <person name="Lu G."/>
            <person name="Zhong M."/>
            <person name="Xu X.-R."/>
            <person name="Han Z.-G."/>
            <person name="Zhang J.-W."/>
            <person name="Tao J."/>
            <person name="Huang Q.-H."/>
            <person name="Zhou J."/>
            <person name="Hu G.-X."/>
            <person name="Gu J."/>
            <person name="Chen S.-J."/>
            <person name="Chen Z."/>
        </authorList>
    </citation>
    <scope>NUCLEOTIDE SEQUENCE [LARGE SCALE MRNA] (ISOFORM 2)</scope>
    <source>
        <tissue>Umbilical cord blood</tissue>
    </source>
</reference>
<reference key="2">
    <citation type="journal article" date="2001" name="Genome Res.">
        <title>Towards a catalog of human genes and proteins: sequencing and analysis of 500 novel complete protein coding human cDNAs.</title>
        <authorList>
            <person name="Wiemann S."/>
            <person name="Weil B."/>
            <person name="Wellenreuther R."/>
            <person name="Gassenhuber J."/>
            <person name="Glassl S."/>
            <person name="Ansorge W."/>
            <person name="Boecher M."/>
            <person name="Bloecker H."/>
            <person name="Bauersachs S."/>
            <person name="Blum H."/>
            <person name="Lauber J."/>
            <person name="Duesterhoeft A."/>
            <person name="Beyer A."/>
            <person name="Koehrer K."/>
            <person name="Strack N."/>
            <person name="Mewes H.-W."/>
            <person name="Ottenwaelder B."/>
            <person name="Obermaier B."/>
            <person name="Tampe J."/>
            <person name="Heubner D."/>
            <person name="Wambutt R."/>
            <person name="Korn B."/>
            <person name="Klein M."/>
            <person name="Poustka A."/>
        </authorList>
    </citation>
    <scope>NUCLEOTIDE SEQUENCE [LARGE SCALE MRNA] (ISOFORM 1)</scope>
    <source>
        <tissue>Testis</tissue>
    </source>
</reference>
<reference key="3">
    <citation type="journal article" date="2003" name="Genome Res.">
        <title>Reevaluating human gene annotation: a second-generation analysis of chromosome 22.</title>
        <authorList>
            <person name="Collins J.E."/>
            <person name="Goward M.E."/>
            <person name="Cole C.G."/>
            <person name="Smink L.J."/>
            <person name="Huckle E.J."/>
            <person name="Knowles S."/>
            <person name="Bye J.M."/>
            <person name="Beare D.M."/>
            <person name="Dunham I."/>
        </authorList>
    </citation>
    <scope>NUCLEOTIDE SEQUENCE [LARGE SCALE MRNA] (ISOFORM 1)</scope>
</reference>
<reference key="4">
    <citation type="submission" date="2003-05" db="EMBL/GenBank/DDBJ databases">
        <title>Cloning of human full-length CDSs in BD Creator(TM) system donor vector.</title>
        <authorList>
            <person name="Kalnine N."/>
            <person name="Chen X."/>
            <person name="Rolfs A."/>
            <person name="Halleck A."/>
            <person name="Hines L."/>
            <person name="Eisenstein S."/>
            <person name="Koundinya M."/>
            <person name="Raphael J."/>
            <person name="Moreira D."/>
            <person name="Kelley T."/>
            <person name="LaBaer J."/>
            <person name="Lin Y."/>
            <person name="Phelan M."/>
            <person name="Farmer A."/>
        </authorList>
    </citation>
    <scope>NUCLEOTIDE SEQUENCE [LARGE SCALE MRNA]</scope>
</reference>
<reference key="5">
    <citation type="journal article" date="2004" name="Genome Biol.">
        <title>A genome annotation-driven approach to cloning the human ORFeome.</title>
        <authorList>
            <person name="Collins J.E."/>
            <person name="Wright C.L."/>
            <person name="Edwards C.A."/>
            <person name="Davis M.P."/>
            <person name="Grinham J.A."/>
            <person name="Cole C.G."/>
            <person name="Goward M.E."/>
            <person name="Aguado B."/>
            <person name="Mallya M."/>
            <person name="Mokrab Y."/>
            <person name="Huckle E.J."/>
            <person name="Beare D.M."/>
            <person name="Dunham I."/>
        </authorList>
    </citation>
    <scope>NUCLEOTIDE SEQUENCE [LARGE SCALE MRNA] (ISOFORM 1)</scope>
</reference>
<reference key="6">
    <citation type="journal article" date="1999" name="Nature">
        <title>The DNA sequence of human chromosome 22.</title>
        <authorList>
            <person name="Dunham I."/>
            <person name="Hunt A.R."/>
            <person name="Collins J.E."/>
            <person name="Bruskiewich R."/>
            <person name="Beare D.M."/>
            <person name="Clamp M."/>
            <person name="Smink L.J."/>
            <person name="Ainscough R."/>
            <person name="Almeida J.P."/>
            <person name="Babbage A.K."/>
            <person name="Bagguley C."/>
            <person name="Bailey J."/>
            <person name="Barlow K.F."/>
            <person name="Bates K.N."/>
            <person name="Beasley O.P."/>
            <person name="Bird C.P."/>
            <person name="Blakey S.E."/>
            <person name="Bridgeman A.M."/>
            <person name="Buck D."/>
            <person name="Burgess J."/>
            <person name="Burrill W.D."/>
            <person name="Burton J."/>
            <person name="Carder C."/>
            <person name="Carter N.P."/>
            <person name="Chen Y."/>
            <person name="Clark G."/>
            <person name="Clegg S.M."/>
            <person name="Cobley V.E."/>
            <person name="Cole C.G."/>
            <person name="Collier R.E."/>
            <person name="Connor R."/>
            <person name="Conroy D."/>
            <person name="Corby N.R."/>
            <person name="Coville G.J."/>
            <person name="Cox A.V."/>
            <person name="Davis J."/>
            <person name="Dawson E."/>
            <person name="Dhami P.D."/>
            <person name="Dockree C."/>
            <person name="Dodsworth S.J."/>
            <person name="Durbin R.M."/>
            <person name="Ellington A.G."/>
            <person name="Evans K.L."/>
            <person name="Fey J.M."/>
            <person name="Fleming K."/>
            <person name="French L."/>
            <person name="Garner A.A."/>
            <person name="Gilbert J.G.R."/>
            <person name="Goward M.E."/>
            <person name="Grafham D.V."/>
            <person name="Griffiths M.N.D."/>
            <person name="Hall C."/>
            <person name="Hall R.E."/>
            <person name="Hall-Tamlyn G."/>
            <person name="Heathcott R.W."/>
            <person name="Ho S."/>
            <person name="Holmes S."/>
            <person name="Hunt S.E."/>
            <person name="Jones M.C."/>
            <person name="Kershaw J."/>
            <person name="Kimberley A.M."/>
            <person name="King A."/>
            <person name="Laird G.K."/>
            <person name="Langford C.F."/>
            <person name="Leversha M.A."/>
            <person name="Lloyd C."/>
            <person name="Lloyd D.M."/>
            <person name="Martyn I.D."/>
            <person name="Mashreghi-Mohammadi M."/>
            <person name="Matthews L.H."/>
            <person name="Mccann O.T."/>
            <person name="Mcclay J."/>
            <person name="Mclaren S."/>
            <person name="McMurray A.A."/>
            <person name="Milne S.A."/>
            <person name="Mortimore B.J."/>
            <person name="Odell C.N."/>
            <person name="Pavitt R."/>
            <person name="Pearce A.V."/>
            <person name="Pearson D."/>
            <person name="Phillimore B.J.C.T."/>
            <person name="Phillips S.H."/>
            <person name="Plumb R.W."/>
            <person name="Ramsay H."/>
            <person name="Ramsey Y."/>
            <person name="Rogers L."/>
            <person name="Ross M.T."/>
            <person name="Scott C.E."/>
            <person name="Sehra H.K."/>
            <person name="Skuce C.D."/>
            <person name="Smalley S."/>
            <person name="Smith M.L."/>
            <person name="Soderlund C."/>
            <person name="Spragon L."/>
            <person name="Steward C.A."/>
            <person name="Sulston J.E."/>
            <person name="Swann R.M."/>
            <person name="Vaudin M."/>
            <person name="Wall M."/>
            <person name="Wallis J.M."/>
            <person name="Whiteley M.N."/>
            <person name="Willey D.L."/>
            <person name="Williams L."/>
            <person name="Williams S.A."/>
            <person name="Williamson H."/>
            <person name="Wilmer T.E."/>
            <person name="Wilming L."/>
            <person name="Wright C.L."/>
            <person name="Hubbard T."/>
            <person name="Bentley D.R."/>
            <person name="Beck S."/>
            <person name="Rogers J."/>
            <person name="Shimizu N."/>
            <person name="Minoshima S."/>
            <person name="Kawasaki K."/>
            <person name="Sasaki T."/>
            <person name="Asakawa S."/>
            <person name="Kudoh J."/>
            <person name="Shintani A."/>
            <person name="Shibuya K."/>
            <person name="Yoshizaki Y."/>
            <person name="Aoki N."/>
            <person name="Mitsuyama S."/>
            <person name="Roe B.A."/>
            <person name="Chen F."/>
            <person name="Chu L."/>
            <person name="Crabtree J."/>
            <person name="Deschamps S."/>
            <person name="Do A."/>
            <person name="Do T."/>
            <person name="Dorman A."/>
            <person name="Fang F."/>
            <person name="Fu Y."/>
            <person name="Hu P."/>
            <person name="Hua A."/>
            <person name="Kenton S."/>
            <person name="Lai H."/>
            <person name="Lao H.I."/>
            <person name="Lewis J."/>
            <person name="Lewis S."/>
            <person name="Lin S.-P."/>
            <person name="Loh P."/>
            <person name="Malaj E."/>
            <person name="Nguyen T."/>
            <person name="Pan H."/>
            <person name="Phan S."/>
            <person name="Qi S."/>
            <person name="Qian Y."/>
            <person name="Ray L."/>
            <person name="Ren Q."/>
            <person name="Shaull S."/>
            <person name="Sloan D."/>
            <person name="Song L."/>
            <person name="Wang Q."/>
            <person name="Wang Y."/>
            <person name="Wang Z."/>
            <person name="White J."/>
            <person name="Willingham D."/>
            <person name="Wu H."/>
            <person name="Yao Z."/>
            <person name="Zhan M."/>
            <person name="Zhang G."/>
            <person name="Chissoe S."/>
            <person name="Murray J."/>
            <person name="Miller N."/>
            <person name="Minx P."/>
            <person name="Fulton R."/>
            <person name="Johnson D."/>
            <person name="Bemis G."/>
            <person name="Bentley D."/>
            <person name="Bradshaw H."/>
            <person name="Bourne S."/>
            <person name="Cordes M."/>
            <person name="Du Z."/>
            <person name="Fulton L."/>
            <person name="Goela D."/>
            <person name="Graves T."/>
            <person name="Hawkins J."/>
            <person name="Hinds K."/>
            <person name="Kemp K."/>
            <person name="Latreille P."/>
            <person name="Layman D."/>
            <person name="Ozersky P."/>
            <person name="Rohlfing T."/>
            <person name="Scheet P."/>
            <person name="Walker C."/>
            <person name="Wamsley A."/>
            <person name="Wohldmann P."/>
            <person name="Pepin K."/>
            <person name="Nelson J."/>
            <person name="Korf I."/>
            <person name="Bedell J.A."/>
            <person name="Hillier L.W."/>
            <person name="Mardis E."/>
            <person name="Waterston R."/>
            <person name="Wilson R."/>
            <person name="Emanuel B.S."/>
            <person name="Shaikh T."/>
            <person name="Kurahashi H."/>
            <person name="Saitta S."/>
            <person name="Budarf M.L."/>
            <person name="McDermid H.E."/>
            <person name="Johnson A."/>
            <person name="Wong A.C.C."/>
            <person name="Morrow B.E."/>
            <person name="Edelmann L."/>
            <person name="Kim U.J."/>
            <person name="Shizuya H."/>
            <person name="Simon M.I."/>
            <person name="Dumanski J.P."/>
            <person name="Peyrard M."/>
            <person name="Kedra D."/>
            <person name="Seroussi E."/>
            <person name="Fransson I."/>
            <person name="Tapia I."/>
            <person name="Bruder C.E."/>
            <person name="O'Brien K.P."/>
            <person name="Wilkinson P."/>
            <person name="Bodenteich A."/>
            <person name="Hartman K."/>
            <person name="Hu X."/>
            <person name="Khan A.S."/>
            <person name="Lane L."/>
            <person name="Tilahun Y."/>
            <person name="Wright H."/>
        </authorList>
    </citation>
    <scope>NUCLEOTIDE SEQUENCE [LARGE SCALE GENOMIC DNA]</scope>
</reference>
<reference key="7">
    <citation type="submission" date="2005-07" db="EMBL/GenBank/DDBJ databases">
        <authorList>
            <person name="Mural R.J."/>
            <person name="Istrail S."/>
            <person name="Sutton G.G."/>
            <person name="Florea L."/>
            <person name="Halpern A.L."/>
            <person name="Mobarry C.M."/>
            <person name="Lippert R."/>
            <person name="Walenz B."/>
            <person name="Shatkay H."/>
            <person name="Dew I."/>
            <person name="Miller J.R."/>
            <person name="Flanigan M.J."/>
            <person name="Edwards N.J."/>
            <person name="Bolanos R."/>
            <person name="Fasulo D."/>
            <person name="Halldorsson B.V."/>
            <person name="Hannenhalli S."/>
            <person name="Turner R."/>
            <person name="Yooseph S."/>
            <person name="Lu F."/>
            <person name="Nusskern D.R."/>
            <person name="Shue B.C."/>
            <person name="Zheng X.H."/>
            <person name="Zhong F."/>
            <person name="Delcher A.L."/>
            <person name="Huson D.H."/>
            <person name="Kravitz S.A."/>
            <person name="Mouchard L."/>
            <person name="Reinert K."/>
            <person name="Remington K.A."/>
            <person name="Clark A.G."/>
            <person name="Waterman M.S."/>
            <person name="Eichler E.E."/>
            <person name="Adams M.D."/>
            <person name="Hunkapiller M.W."/>
            <person name="Myers E.W."/>
            <person name="Venter J.C."/>
        </authorList>
    </citation>
    <scope>NUCLEOTIDE SEQUENCE [LARGE SCALE GENOMIC DNA]</scope>
</reference>
<reference key="8">
    <citation type="journal article" date="2004" name="Genome Res.">
        <title>The status, quality, and expansion of the NIH full-length cDNA project: the Mammalian Gene Collection (MGC).</title>
        <authorList>
            <consortium name="The MGC Project Team"/>
        </authorList>
    </citation>
    <scope>NUCLEOTIDE SEQUENCE [LARGE SCALE MRNA] (ISOFORM 1)</scope>
    <source>
        <tissue>Skin</tissue>
    </source>
</reference>
<reference key="9">
    <citation type="journal article" date="2002" name="RNA">
        <title>Purification and characterization of native spliceosomes suitable for three-dimensional structural analysis.</title>
        <authorList>
            <person name="Jurica M.S."/>
            <person name="Licklider L.J."/>
            <person name="Gygi S.P."/>
            <person name="Grigorieff N."/>
            <person name="Moore M.J."/>
        </authorList>
    </citation>
    <scope>IDENTIFICATION BY MASS SPECTROMETRY</scope>
    <scope>IDENTIFICATION IN THE SPLICEOSOMAL C COMPLEX</scope>
</reference>
<reference key="10">
    <citation type="journal article" date="2006" name="Cell">
        <title>Global, in vivo, and site-specific phosphorylation dynamics in signaling networks.</title>
        <authorList>
            <person name="Olsen J.V."/>
            <person name="Blagoev B."/>
            <person name="Gnad F."/>
            <person name="Macek B."/>
            <person name="Kumar C."/>
            <person name="Mortensen P."/>
            <person name="Mann M."/>
        </authorList>
    </citation>
    <scope>PHOSPHORYLATION [LARGE SCALE ANALYSIS] AT SER-98</scope>
    <scope>IDENTIFICATION BY MASS SPECTROMETRY [LARGE SCALE ANALYSIS]</scope>
    <source>
        <tissue>Cervix carcinoma</tissue>
    </source>
</reference>
<reference key="11">
    <citation type="journal article" date="2008" name="Proc. Natl. Acad. Sci. U.S.A.">
        <title>A quantitative atlas of mitotic phosphorylation.</title>
        <authorList>
            <person name="Dephoure N."/>
            <person name="Zhou C."/>
            <person name="Villen J."/>
            <person name="Beausoleil S.A."/>
            <person name="Bakalarski C.E."/>
            <person name="Elledge S.J."/>
            <person name="Gygi S.P."/>
        </authorList>
    </citation>
    <scope>PHOSPHORYLATION [LARGE SCALE ANALYSIS] AT SER-210</scope>
    <scope>IDENTIFICATION BY MASS SPECTROMETRY [LARGE SCALE ANALYSIS]</scope>
    <source>
        <tissue>Cervix carcinoma</tissue>
    </source>
</reference>
<reference key="12">
    <citation type="journal article" date="2009" name="Anal. Chem.">
        <title>Lys-N and trypsin cover complementary parts of the phosphoproteome in a refined SCX-based approach.</title>
        <authorList>
            <person name="Gauci S."/>
            <person name="Helbig A.O."/>
            <person name="Slijper M."/>
            <person name="Krijgsveld J."/>
            <person name="Heck A.J."/>
            <person name="Mohammed S."/>
        </authorList>
    </citation>
    <scope>IDENTIFICATION BY MASS SPECTROMETRY [LARGE SCALE ANALYSIS]</scope>
</reference>
<reference key="13">
    <citation type="journal article" date="2009" name="Nucleic Acids Res.">
        <title>Isolation and characterization of post-splicing lariat-intron complexes.</title>
        <authorList>
            <person name="Yoshimoto R."/>
            <person name="Kataoka N."/>
            <person name="Okawa K."/>
            <person name="Ohno M."/>
        </authorList>
    </citation>
    <scope>FUNCTION IN SPLICEOSOME DISASSEMBLY</scope>
    <scope>IDENTIFICATION IN THE INTRON LARGE COMPLEX</scope>
    <scope>INTERACTION WITH DHX15</scope>
</reference>
<reference key="14">
    <citation type="journal article" date="2009" name="Sci. Signal.">
        <title>Quantitative phosphoproteomic analysis of T cell receptor signaling reveals system-wide modulation of protein-protein interactions.</title>
        <authorList>
            <person name="Mayya V."/>
            <person name="Lundgren D.H."/>
            <person name="Hwang S.-I."/>
            <person name="Rezaul K."/>
            <person name="Wu L."/>
            <person name="Eng J.K."/>
            <person name="Rodionov V."/>
            <person name="Han D.K."/>
        </authorList>
    </citation>
    <scope>PHOSPHORYLATION [LARGE SCALE ANALYSIS] AT SER-210</scope>
    <scope>IDENTIFICATION BY MASS SPECTROMETRY [LARGE SCALE ANALYSIS]</scope>
    <source>
        <tissue>Leukemic T-cell</tissue>
    </source>
</reference>
<reference key="15">
    <citation type="journal article" date="2010" name="Sci. Signal.">
        <title>Quantitative phosphoproteomics reveals widespread full phosphorylation site occupancy during mitosis.</title>
        <authorList>
            <person name="Olsen J.V."/>
            <person name="Vermeulen M."/>
            <person name="Santamaria A."/>
            <person name="Kumar C."/>
            <person name="Miller M.L."/>
            <person name="Jensen L.J."/>
            <person name="Gnad F."/>
            <person name="Cox J."/>
            <person name="Jensen T.S."/>
            <person name="Nigg E.A."/>
            <person name="Brunak S."/>
            <person name="Mann M."/>
        </authorList>
    </citation>
    <scope>PHOSPHORYLATION [LARGE SCALE ANALYSIS] AT SER-59; SER-98 AND SER-144</scope>
    <scope>IDENTIFICATION BY MASS SPECTROMETRY [LARGE SCALE ANALYSIS]</scope>
    <source>
        <tissue>Cervix carcinoma</tissue>
    </source>
</reference>
<reference key="16">
    <citation type="journal article" date="2011" name="BMC Syst. Biol.">
        <title>Initial characterization of the human central proteome.</title>
        <authorList>
            <person name="Burkard T.R."/>
            <person name="Planyavsky M."/>
            <person name="Kaupe I."/>
            <person name="Breitwieser F.P."/>
            <person name="Buerckstuemmer T."/>
            <person name="Bennett K.L."/>
            <person name="Superti-Furga G."/>
            <person name="Colinge J."/>
        </authorList>
    </citation>
    <scope>IDENTIFICATION BY MASS SPECTROMETRY [LARGE SCALE ANALYSIS]</scope>
</reference>
<reference key="17">
    <citation type="journal article" date="2011" name="Sci. Signal.">
        <title>System-wide temporal characterization of the proteome and phosphoproteome of human embryonic stem cell differentiation.</title>
        <authorList>
            <person name="Rigbolt K.T."/>
            <person name="Prokhorova T.A."/>
            <person name="Akimov V."/>
            <person name="Henningsen J."/>
            <person name="Johansen P.T."/>
            <person name="Kratchmarova I."/>
            <person name="Kassem M."/>
            <person name="Mann M."/>
            <person name="Olsen J.V."/>
            <person name="Blagoev B."/>
        </authorList>
    </citation>
    <scope>PHOSPHORYLATION [LARGE SCALE ANALYSIS] AT SER-98 AND SER-210</scope>
    <scope>IDENTIFICATION BY MASS SPECTROMETRY [LARGE SCALE ANALYSIS]</scope>
</reference>
<reference key="18">
    <citation type="journal article" date="2013" name="J. Proteome Res.">
        <title>Toward a comprehensive characterization of a human cancer cell phosphoproteome.</title>
        <authorList>
            <person name="Zhou H."/>
            <person name="Di Palma S."/>
            <person name="Preisinger C."/>
            <person name="Peng M."/>
            <person name="Polat A.N."/>
            <person name="Heck A.J."/>
            <person name="Mohammed S."/>
        </authorList>
    </citation>
    <scope>PHOSPHORYLATION [LARGE SCALE ANALYSIS] AT SER-59; SER-98 AND SER-210</scope>
    <scope>IDENTIFICATION BY MASS SPECTROMETRY [LARGE SCALE ANALYSIS]</scope>
    <source>
        <tissue>Cervix carcinoma</tissue>
        <tissue>Erythroleukemia</tissue>
    </source>
</reference>
<reference key="19">
    <citation type="journal article" date="2014" name="Genes Cells">
        <title>Identification of a novel component C2ORF3 in the lariat-intron complex: lack of C2ORF3 interferes with pre-mRNA splicing via intron turnover pathway.</title>
        <authorList>
            <person name="Yoshimoto R."/>
            <person name="Okawa K."/>
            <person name="Yoshida M."/>
            <person name="Ohno M."/>
            <person name="Kataoka N."/>
        </authorList>
    </citation>
    <scope>INTERACTION WITH GCFC2</scope>
</reference>
<reference key="20">
    <citation type="journal article" date="2014" name="J. Proteomics">
        <title>An enzyme assisted RP-RPLC approach for in-depth analysis of human liver phosphoproteome.</title>
        <authorList>
            <person name="Bian Y."/>
            <person name="Song C."/>
            <person name="Cheng K."/>
            <person name="Dong M."/>
            <person name="Wang F."/>
            <person name="Huang J."/>
            <person name="Sun D."/>
            <person name="Wang L."/>
            <person name="Ye M."/>
            <person name="Zou H."/>
        </authorList>
    </citation>
    <scope>IDENTIFICATION BY MASS SPECTROMETRY [LARGE SCALE ANALYSIS]</scope>
    <source>
        <tissue>Liver</tissue>
    </source>
</reference>
<name>TFP11_HUMAN</name>
<organism>
    <name type="scientific">Homo sapiens</name>
    <name type="common">Human</name>
    <dbReference type="NCBI Taxonomy" id="9606"/>
    <lineage>
        <taxon>Eukaryota</taxon>
        <taxon>Metazoa</taxon>
        <taxon>Chordata</taxon>
        <taxon>Craniata</taxon>
        <taxon>Vertebrata</taxon>
        <taxon>Euteleostomi</taxon>
        <taxon>Mammalia</taxon>
        <taxon>Eutheria</taxon>
        <taxon>Euarchontoglires</taxon>
        <taxon>Primates</taxon>
        <taxon>Haplorrhini</taxon>
        <taxon>Catarrhini</taxon>
        <taxon>Hominidae</taxon>
        <taxon>Homo</taxon>
    </lineage>
</organism>
<gene>
    <name type="primary">TFIP11</name>
    <name type="synonym">STIP</name>
    <name type="ORF">HSPC006</name>
</gene>
<accession>Q9UBB9</accession>
<accession>O95908</accession>
<accession>Q20WL0</accession>
<accession>Q5H8V8</accession>
<accession>Q9UGV7</accession>
<accession>Q9Y2Q8</accession>
<protein>
    <recommendedName>
        <fullName>Tuftelin-interacting protein 11</fullName>
    </recommendedName>
    <alternativeName>
        <fullName>Septin and tuftelin-interacting protein 1</fullName>
        <shortName>STIP-1</shortName>
    </alternativeName>
</protein>
<sequence length="837" mass="96820">MSLSHLYRDGEGRIDDDDDERENFEITDWDLQNEFNPNRQRHWQTKEEATYGVWAERDSDDERPSFGGKRARDYSAPVNFISAGLKKGAAEEAELEDSDDEEKPVKQDDFPKDFGPRKLKTGGNFKPSQKGFAGGTKSFMDFGSWERHTKGIGQKLLQKMGYVPGRGLGKNAQGIINPIEAKQRKGKGAVGAYGSERTTQSMQDFPVVDSEEEAEEEFQKELSQWRKDPSGSKKKPKYSYKTVEELKAKGRISKKLTAPQKELSQVKVIDMTGREQKVYYSYSQISHKHNVPDDGLPLQSQQLPQSGKEAKAPGFALPELEHNLQLLIDLTEQEIIQNDRQLQYERDMVVNLFHELEKMTEVLDHEERVISNLSKVLEMVEECERRMQPDCSNPLTLDECARIFETLQDKYYEEYRMSDRVDLAVAIVYPLMKEYFKEWDPLKDCTYGTEIISKWKSLLENDQLLSHGGQDLSADAFHRLIWEVWMPFVRNIVTQWQPRNCDPMVDFLDSWVHIIPVWILDNILDQLIFPKLQKEVENWNPLTDTVPIHSWIHPWLPLMQARLEPLYSPIRSKLSSALQKWHPSDSSAKLILQPWKDVFTPGSWEAFMVKNIVPKLGMCLGELVINPHQQHMDAFYWVIDWEGMISVSSLVGLLEKHFFPKWLQVLCSWLSNSPNYEEITKWYLGWKSMFSDQVLAHPSVKDKFNEALDIMNRAVSSNVGAYMQPGARENIAYLTHTERRKDFQYEAMQERREAENMAQRGIGVAASSVPMNFKDLIETKAEEHNIVFMPVIGKRHEGKQLYTFGRIVIYIDRGVVFVQGEKTWVPTSLQSLIDMAK</sequence>
<comment type="function">
    <text evidence="6">Involved in pre-mRNA splicing, specifically in spliceosome disassembly during late-stage splicing events. Intron turnover seems to proceed through reactions in two lariat-intron associated complexes termed Intron Large (IL) and Intron Small (IS). In cooperation with DHX15 seems to mediate the transition of the U2, U5 and U6 snRNP-containing IL complex to the snRNP-free IS complex leading to efficient debranching and turnover of excised introns. May play a role in the differentiation of ameloblasts and odontoblasts or in the forming of the enamel extracellular matrix.</text>
</comment>
<comment type="subunit">
    <text evidence="5 6 7">Identified in the spliceosome C complex. Found in the Intron Large (IL) complex, a post-mRNA release spliceosomal complex containing the excised intron, U2, U5 and U6 snRNPs, and splicing factors. Interacts with TUFT1. Interacts with DHX15; indicative for a recruitment of DHX15 to the IL complex. Interacts with GCFC2.</text>
</comment>
<comment type="interaction">
    <interactant intactId="EBI-1105213">
        <id>Q9UBB9</id>
    </interactant>
    <interactant intactId="EBI-5463075">
        <id>Q4LEZ3</id>
        <label>AARD</label>
    </interactant>
    <organismsDiffer>false</organismsDiffer>
    <experiments>3</experiments>
</comment>
<comment type="interaction">
    <interactant intactId="EBI-1105213">
        <id>Q9UBB9</id>
    </interactant>
    <interactant intactId="EBI-743598">
        <id>Q9NYB9</id>
        <label>ABI2</label>
    </interactant>
    <organismsDiffer>false</organismsDiffer>
    <experiments>6</experiments>
</comment>
<comment type="interaction">
    <interactant intactId="EBI-1105213">
        <id>Q9UBB9</id>
    </interactant>
    <interactant intactId="EBI-11961672">
        <id>O94929-2</id>
        <label>ABLIM3</label>
    </interactant>
    <organismsDiffer>false</organismsDiffer>
    <experiments>3</experiments>
</comment>
<comment type="interaction">
    <interactant intactId="EBI-1105213">
        <id>Q9UBB9</id>
    </interactant>
    <interactant intactId="EBI-745226">
        <id>Q13155</id>
        <label>AIMP2</label>
    </interactant>
    <organismsDiffer>false</organismsDiffer>
    <experiments>6</experiments>
</comment>
<comment type="interaction">
    <interactant intactId="EBI-1105213">
        <id>Q9UBB9</id>
    </interactant>
    <interactant intactId="EBI-8643161">
        <id>Q9NX04</id>
        <label>AIRIM</label>
    </interactant>
    <organismsDiffer>false</organismsDiffer>
    <experiments>6</experiments>
</comment>
<comment type="interaction">
    <interactant intactId="EBI-1105213">
        <id>Q9UBB9</id>
    </interactant>
    <interactant intactId="EBI-541426">
        <id>Q9BXS5</id>
        <label>AP1M1</label>
    </interactant>
    <organismsDiffer>false</organismsDiffer>
    <experiments>3</experiments>
</comment>
<comment type="interaction">
    <interactant intactId="EBI-1105213">
        <id>Q9UBB9</id>
    </interactant>
    <interactant intactId="EBI-2843626">
        <id>Q9P291</id>
        <label>ARMCX1</label>
    </interactant>
    <organismsDiffer>false</organismsDiffer>
    <experiments>4</experiments>
</comment>
<comment type="interaction">
    <interactant intactId="EBI-1105213">
        <id>Q9UBB9</id>
    </interactant>
    <interactant intactId="EBI-355815">
        <id>P48047</id>
        <label>ATP5PO</label>
    </interactant>
    <organismsDiffer>false</organismsDiffer>
    <experiments>3</experiments>
</comment>
<comment type="interaction">
    <interactant intactId="EBI-1105213">
        <id>Q9UBB9</id>
    </interactant>
    <interactant intactId="EBI-1166928">
        <id>Q8N5M1</id>
        <label>ATPAF2</label>
    </interactant>
    <organismsDiffer>false</organismsDiffer>
    <experiments>3</experiments>
</comment>
<comment type="interaction">
    <interactant intactId="EBI-1105213">
        <id>Q9UBB9</id>
    </interactant>
    <interactant intactId="EBI-16429430">
        <id>A0A0S2Z4M1</id>
        <label>AXIN1</label>
    </interactant>
    <organismsDiffer>false</organismsDiffer>
    <experiments>3</experiments>
</comment>
<comment type="interaction">
    <interactant intactId="EBI-1105213">
        <id>Q9UBB9</id>
    </interactant>
    <interactant intactId="EBI-710484">
        <id>O15169</id>
        <label>AXIN1</label>
    </interactant>
    <organismsDiffer>false</organismsDiffer>
    <experiments>3</experiments>
</comment>
<comment type="interaction">
    <interactant intactId="EBI-1105213">
        <id>Q9UBB9</id>
    </interactant>
    <interactant intactId="EBI-741542">
        <id>Q9UIF8</id>
        <label>BAZ2B</label>
    </interactant>
    <organismsDiffer>false</organismsDiffer>
    <experiments>3</experiments>
</comment>
<comment type="interaction">
    <interactant intactId="EBI-1105213">
        <id>Q9UBB9</id>
    </interactant>
    <interactant intactId="EBI-17508719">
        <id>Q7RTU4</id>
        <label>BHLHA9</label>
    </interactant>
    <organismsDiffer>false</organismsDiffer>
    <experiments>3</experiments>
</comment>
<comment type="interaction">
    <interactant intactId="EBI-1105213">
        <id>Q9UBB9</id>
    </interactant>
    <interactant intactId="EBI-3919268">
        <id>Q96LC9</id>
        <label>BMF</label>
    </interactant>
    <organismsDiffer>false</organismsDiffer>
    <experiments>7</experiments>
</comment>
<comment type="interaction">
    <interactant intactId="EBI-1105213">
        <id>Q9UBB9</id>
    </interactant>
    <interactant intactId="EBI-714754">
        <id>O95696</id>
        <label>BRD1</label>
    </interactant>
    <organismsDiffer>false</organismsDiffer>
    <experiments>3</experiments>
</comment>
<comment type="interaction">
    <interactant intactId="EBI-1105213">
        <id>Q9UBB9</id>
    </interactant>
    <interactant intactId="EBI-358049">
        <id>Q13895</id>
        <label>BYSL</label>
    </interactant>
    <organismsDiffer>false</organismsDiffer>
    <experiments>3</experiments>
</comment>
<comment type="interaction">
    <interactant intactId="EBI-1105213">
        <id>Q9UBB9</id>
    </interactant>
    <interactant intactId="EBI-739879">
        <id>Q53TS8</id>
        <label>C2CD6</label>
    </interactant>
    <organismsDiffer>false</organismsDiffer>
    <experiments>3</experiments>
</comment>
<comment type="interaction">
    <interactant intactId="EBI-1105213">
        <id>Q9UBB9</id>
    </interactant>
    <interactant intactId="EBI-751319">
        <id>Q9H257</id>
        <label>CARD9</label>
    </interactant>
    <organismsDiffer>false</organismsDiffer>
    <experiments>3</experiments>
</comment>
<comment type="interaction">
    <interactant intactId="EBI-1105213">
        <id>Q9UBB9</id>
    </interactant>
    <interactant intactId="EBI-11530605">
        <id>Q9H257-2</id>
        <label>CARD9</label>
    </interactant>
    <organismsDiffer>false</organismsDiffer>
    <experiments>3</experiments>
</comment>
<comment type="interaction">
    <interactant intactId="EBI-1105213">
        <id>Q9UBB9</id>
    </interactant>
    <interactant intactId="EBI-3893101">
        <id>Q969G5</id>
        <label>CAVIN3</label>
    </interactant>
    <organismsDiffer>false</organismsDiffer>
    <experiments>3</experiments>
</comment>
<comment type="interaction">
    <interactant intactId="EBI-1105213">
        <id>Q9UBB9</id>
    </interactant>
    <interactant intactId="EBI-712912">
        <id>Q9HC52</id>
        <label>CBX8</label>
    </interactant>
    <organismsDiffer>false</organismsDiffer>
    <experiments>3</experiments>
</comment>
<comment type="interaction">
    <interactant intactId="EBI-1105213">
        <id>Q9UBB9</id>
    </interactant>
    <interactant intactId="EBI-10171570">
        <id>Q68D86</id>
        <label>CCDC102B</label>
    </interactant>
    <organismsDiffer>false</organismsDiffer>
    <experiments>3</experiments>
</comment>
<comment type="interaction">
    <interactant intactId="EBI-1105213">
        <id>Q9UBB9</id>
    </interactant>
    <interactant intactId="EBI-744311">
        <id>Q8IYX3</id>
        <label>CCDC116</label>
    </interactant>
    <organismsDiffer>false</organismsDiffer>
    <experiments>3</experiments>
</comment>
<comment type="interaction">
    <interactant intactId="EBI-1105213">
        <id>Q9UBB9</id>
    </interactant>
    <interactant intactId="EBI-744556">
        <id>Q96HB5</id>
        <label>CCDC120</label>
    </interactant>
    <organismsDiffer>false</organismsDiffer>
    <experiments>3</experiments>
</comment>
<comment type="interaction">
    <interactant intactId="EBI-1105213">
        <id>Q9UBB9</id>
    </interactant>
    <interactant intactId="EBI-2836982">
        <id>Q6ZUS5</id>
        <label>CCDC121</label>
    </interactant>
    <organismsDiffer>false</organismsDiffer>
    <experiments>7</experiments>
</comment>
<comment type="interaction">
    <interactant intactId="EBI-1105213">
        <id>Q9UBB9</id>
    </interactant>
    <interactant intactId="EBI-10961312">
        <id>Q8IYE1</id>
        <label>CCDC13</label>
    </interactant>
    <organismsDiffer>false</organismsDiffer>
    <experiments>3</experiments>
</comment>
<comment type="interaction">
    <interactant intactId="EBI-1105213">
        <id>Q9UBB9</id>
    </interactant>
    <interactant intactId="EBI-10749669">
        <id>Q8IYE0</id>
        <label>CCDC146</label>
    </interactant>
    <organismsDiffer>false</organismsDiffer>
    <experiments>3</experiments>
</comment>
<comment type="interaction">
    <interactant intactId="EBI-1105213">
        <id>Q9UBB9</id>
    </interactant>
    <interactant intactId="EBI-10247802">
        <id>Q8IYE0-2</id>
        <label>CCDC146</label>
    </interactant>
    <organismsDiffer>false</organismsDiffer>
    <experiments>3</experiments>
</comment>
<comment type="interaction">
    <interactant intactId="EBI-1105213">
        <id>Q9UBB9</id>
    </interactant>
    <interactant intactId="EBI-10181422">
        <id>A0A1B0GWI1</id>
        <label>CCDC196</label>
    </interactant>
    <organismsDiffer>false</organismsDiffer>
    <experiments>3</experiments>
</comment>
<comment type="interaction">
    <interactant intactId="EBI-1105213">
        <id>Q9UBB9</id>
    </interactant>
    <interactant intactId="EBI-747041">
        <id>Q96M95</id>
        <label>CCDC42</label>
    </interactant>
    <organismsDiffer>false</organismsDiffer>
    <experiments>5</experiments>
</comment>
<comment type="interaction">
    <interactant intactId="EBI-1105213">
        <id>Q9UBB9</id>
    </interactant>
    <interactant intactId="EBI-10961624">
        <id>Q2TAC2-2</id>
        <label>CCDC57</label>
    </interactant>
    <organismsDiffer>false</organismsDiffer>
    <experiments>3</experiments>
</comment>
<comment type="interaction">
    <interactant intactId="EBI-1105213">
        <id>Q9UBB9</id>
    </interactant>
    <interactant intactId="EBI-1045350">
        <id>Q16204</id>
        <label>CCDC6</label>
    </interactant>
    <organismsDiffer>false</organismsDiffer>
    <experiments>3</experiments>
</comment>
<comment type="interaction">
    <interactant intactId="EBI-1105213">
        <id>Q9UBB9</id>
    </interactant>
    <interactant intactId="EBI-2813327">
        <id>Q9H2F9</id>
        <label>CCDC68</label>
    </interactant>
    <organismsDiffer>false</organismsDiffer>
    <experiments>8</experiments>
</comment>
<comment type="interaction">
    <interactant intactId="EBI-1105213">
        <id>Q9UBB9</id>
    </interactant>
    <interactant intactId="EBI-10175300">
        <id>Q8TD31-3</id>
        <label>CCHCR1</label>
    </interactant>
    <organismsDiffer>false</organismsDiffer>
    <experiments>8</experiments>
</comment>
<comment type="interaction">
    <interactant intactId="EBI-1105213">
        <id>Q9UBB9</id>
    </interactant>
    <interactant intactId="EBI-375013">
        <id>P30281</id>
        <label>CCND3</label>
    </interactant>
    <organismsDiffer>false</organismsDiffer>
    <experiments>5</experiments>
</comment>
<comment type="interaction">
    <interactant intactId="EBI-1105213">
        <id>Q9UBB9</id>
    </interactant>
    <interactant intactId="EBI-3905829">
        <id>P51959</id>
        <label>CCNG1</label>
    </interactant>
    <organismsDiffer>false</organismsDiffer>
    <experiments>3</experiments>
</comment>
<comment type="interaction">
    <interactant intactId="EBI-1105213">
        <id>Q9UBB9</id>
    </interactant>
    <interactant intactId="EBI-2836773">
        <id>Q9UK58</id>
        <label>CCNL1</label>
    </interactant>
    <organismsDiffer>false</organismsDiffer>
    <experiments>3</experiments>
</comment>
<comment type="interaction">
    <interactant intactId="EBI-1105213">
        <id>Q9UBB9</id>
    </interactant>
    <interactant intactId="EBI-375077">
        <id>P38936</id>
        <label>CDKN1A</label>
    </interactant>
    <organismsDiffer>false</organismsDiffer>
    <experiments>3</experiments>
</comment>
<comment type="interaction">
    <interactant intactId="EBI-1105213">
        <id>Q9UBB9</id>
    </interactant>
    <interactant intactId="EBI-11063830">
        <id>Q86X02</id>
        <label>CDR2L</label>
    </interactant>
    <organismsDiffer>false</organismsDiffer>
    <experiments>3</experiments>
</comment>
<comment type="interaction">
    <interactant intactId="EBI-1105213">
        <id>Q9UBB9</id>
    </interactant>
    <interactant intactId="EBI-2515234">
        <id>Q71F23</id>
        <label>CENPU</label>
    </interactant>
    <organismsDiffer>false</organismsDiffer>
    <experiments>4</experiments>
</comment>
<comment type="interaction">
    <interactant intactId="EBI-1105213">
        <id>Q9UBB9</id>
    </interactant>
    <interactant intactId="EBI-308614">
        <id>Q86XR8</id>
        <label>CEP57</label>
    </interactant>
    <organismsDiffer>false</organismsDiffer>
    <experiments>4</experiments>
</comment>
<comment type="interaction">
    <interactant intactId="EBI-1105213">
        <id>Q9UBB9</id>
    </interactant>
    <interactant intactId="EBI-11752486">
        <id>Q86XR8-3</id>
        <label>CEP57</label>
    </interactant>
    <organismsDiffer>false</organismsDiffer>
    <experiments>3</experiments>
</comment>
<comment type="interaction">
    <interactant intactId="EBI-1105213">
        <id>Q9UBB9</id>
    </interactant>
    <interactant intactId="EBI-1104570">
        <id>Q8IYX8</id>
        <label>CEP57L1</label>
    </interactant>
    <organismsDiffer>false</organismsDiffer>
    <experiments>3</experiments>
</comment>
<comment type="interaction">
    <interactant intactId="EBI-1105213">
        <id>Q9UBB9</id>
    </interactant>
    <interactant intactId="EBI-372775">
        <id>Q96GE4</id>
        <label>CEP95</label>
    </interactant>
    <organismsDiffer>false</organismsDiffer>
    <experiments>3</experiments>
</comment>
<comment type="interaction">
    <interactant intactId="EBI-1105213">
        <id>Q9UBB9</id>
    </interactant>
    <interactant intactId="EBI-12382974">
        <id>Q2M329</id>
        <label>CFAP184</label>
    </interactant>
    <organismsDiffer>false</organismsDiffer>
    <experiments>5</experiments>
</comment>
<comment type="interaction">
    <interactant intactId="EBI-1105213">
        <id>Q9UBB9</id>
    </interactant>
    <interactant intactId="EBI-749051">
        <id>Q8IYR0</id>
        <label>CFAP206</label>
    </interactant>
    <organismsDiffer>false</organismsDiffer>
    <experiments>4</experiments>
</comment>
<comment type="interaction">
    <interactant intactId="EBI-1105213">
        <id>Q9UBB9</id>
    </interactant>
    <interactant intactId="EBI-745535">
        <id>Q8NI60</id>
        <label>COQ8A</label>
    </interactant>
    <organismsDiffer>false</organismsDiffer>
    <experiments>13</experiments>
</comment>
<comment type="interaction">
    <interactant intactId="EBI-1105213">
        <id>Q9UBB9</id>
    </interactant>
    <interactant intactId="EBI-1053725">
        <id>P10606</id>
        <label>COX5B</label>
    </interactant>
    <organismsDiffer>false</organismsDiffer>
    <experiments>5</experiments>
</comment>
<comment type="interaction">
    <interactant intactId="EBI-1105213">
        <id>Q9UBB9</id>
    </interactant>
    <interactant intactId="EBI-6873363">
        <id>Q8WUE5</id>
        <label>CT55</label>
    </interactant>
    <organismsDiffer>false</organismsDiffer>
    <experiments>3</experiments>
</comment>
<comment type="interaction">
    <interactant intactId="EBI-1105213">
        <id>Q9UBB9</id>
    </interactant>
    <interactant intactId="EBI-5453285">
        <id>Q2TBE0</id>
        <label>CWF19L2</label>
    </interactant>
    <organismsDiffer>false</organismsDiffer>
    <experiments>3</experiments>
</comment>
<comment type="interaction">
    <interactant intactId="EBI-1105213">
        <id>Q9UBB9</id>
    </interactant>
    <interactant intactId="EBI-77321">
        <id>Q9UER7</id>
        <label>DAXX</label>
    </interactant>
    <organismsDiffer>false</organismsDiffer>
    <experiments>3</experiments>
</comment>
<comment type="interaction">
    <interactant intactId="EBI-1105213">
        <id>Q9UBB9</id>
    </interactant>
    <interactant intactId="EBI-8787165">
        <id>Q9UHL0</id>
        <label>DDX25</label>
    </interactant>
    <organismsDiffer>false</organismsDiffer>
    <experiments>3</experiments>
</comment>
<comment type="interaction">
    <interactant intactId="EBI-1105213">
        <id>Q9UBB9</id>
    </interactant>
    <interactant intactId="EBI-1055572">
        <id>P17661</id>
        <label>DES</label>
    </interactant>
    <organismsDiffer>false</organismsDiffer>
    <experiments>3</experiments>
</comment>
<comment type="interaction">
    <interactant intactId="EBI-1105213">
        <id>Q9UBB9</id>
    </interactant>
    <interactant intactId="EBI-529989">
        <id>Q9NRI5</id>
        <label>DISC1</label>
    </interactant>
    <organismsDiffer>false</organismsDiffer>
    <experiments>3</experiments>
</comment>
<comment type="interaction">
    <interactant intactId="EBI-1105213">
        <id>Q9UBB9</id>
    </interactant>
    <interactant intactId="EBI-12082590">
        <id>Q6W0C5</id>
        <label>DPPA3</label>
    </interactant>
    <organismsDiffer>false</organismsDiffer>
    <experiments>3</experiments>
</comment>
<comment type="interaction">
    <interactant intactId="EBI-1105213">
        <id>Q9UBB9</id>
    </interactant>
    <interactant intactId="EBI-11984733">
        <id>O60941-5</id>
        <label>DTNB</label>
    </interactant>
    <organismsDiffer>false</organismsDiffer>
    <experiments>3</experiments>
</comment>
<comment type="interaction">
    <interactant intactId="EBI-1105213">
        <id>Q9UBB9</id>
    </interactant>
    <interactant intactId="EBI-353818">
        <id>O15371</id>
        <label>EIF3D</label>
    </interactant>
    <organismsDiffer>false</organismsDiffer>
    <experiments>3</experiments>
</comment>
<comment type="interaction">
    <interactant intactId="EBI-1105213">
        <id>Q9UBB9</id>
    </interactant>
    <interactant intactId="EBI-6255981">
        <id>Q7L775</id>
        <label>EPM2AIP1</label>
    </interactant>
    <organismsDiffer>false</organismsDiffer>
    <experiments>3</experiments>
</comment>
<comment type="interaction">
    <interactant intactId="EBI-1105213">
        <id>Q9UBB9</id>
    </interactant>
    <interactant intactId="EBI-2813180">
        <id>Q86VI1</id>
        <label>EXOC3L1</label>
    </interactant>
    <organismsDiffer>false</organismsDiffer>
    <experiments>3</experiments>
</comment>
<comment type="interaction">
    <interactant intactId="EBI-1105213">
        <id>Q9UBB9</id>
    </interactant>
    <interactant intactId="EBI-742102">
        <id>Q8IYI6</id>
        <label>EXOC8</label>
    </interactant>
    <organismsDiffer>false</organismsDiffer>
    <experiments>3</experiments>
</comment>
<comment type="interaction">
    <interactant intactId="EBI-1105213">
        <id>Q9UBB9</id>
    </interactant>
    <interactant intactId="EBI-371876">
        <id>Q9NQT4</id>
        <label>EXOSC5</label>
    </interactant>
    <organismsDiffer>false</organismsDiffer>
    <experiments>4</experiments>
</comment>
<comment type="interaction">
    <interactant intactId="EBI-1105213">
        <id>Q9UBB9</id>
    </interactant>
    <interactant intactId="EBI-751248">
        <id>Q8NE31</id>
        <label>FAM13C</label>
    </interactant>
    <organismsDiffer>false</organismsDiffer>
    <experiments>5</experiments>
</comment>
<comment type="interaction">
    <interactant intactId="EBI-1105213">
        <id>Q9UBB9</id>
    </interactant>
    <interactant intactId="EBI-749727">
        <id>Q8NDB6</id>
        <label>FAM156A</label>
    </interactant>
    <organismsDiffer>false</organismsDiffer>
    <experiments>3</experiments>
</comment>
<comment type="interaction">
    <interactant intactId="EBI-1105213">
        <id>Q9UBB9</id>
    </interactant>
    <interactant intactId="EBI-719941">
        <id>Q3B820</id>
        <label>FAM161A</label>
    </interactant>
    <organismsDiffer>false</organismsDiffer>
    <experiments>9</experiments>
</comment>
<comment type="interaction">
    <interactant intactId="EBI-1105213">
        <id>Q9UBB9</id>
    </interactant>
    <interactant intactId="EBI-7225287">
        <id>Q96MY7</id>
        <label>FAM161B</label>
    </interactant>
    <organismsDiffer>false</organismsDiffer>
    <experiments>3</experiments>
</comment>
<comment type="interaction">
    <interactant intactId="EBI-1105213">
        <id>Q9UBB9</id>
    </interactant>
    <interactant intactId="EBI-742802">
        <id>Q9Y247</id>
        <label>FAM50B</label>
    </interactant>
    <organismsDiffer>false</organismsDiffer>
    <experiments>3</experiments>
</comment>
<comment type="interaction">
    <interactant intactId="EBI-1105213">
        <id>Q9UBB9</id>
    </interactant>
    <interactant intactId="EBI-11993062">
        <id>Q8TBF8</id>
        <label>FAM81A</label>
    </interactant>
    <organismsDiffer>false</organismsDiffer>
    <experiments>3</experiments>
</comment>
<comment type="interaction">
    <interactant intactId="EBI-1105213">
        <id>Q9UBB9</id>
    </interactant>
    <interactant intactId="EBI-6658203">
        <id>Q86YD7</id>
        <label>FAM90A1</label>
    </interactant>
    <organismsDiffer>false</organismsDiffer>
    <experiments>3</experiments>
</comment>
<comment type="interaction">
    <interactant intactId="EBI-1105213">
        <id>Q9UBB9</id>
    </interactant>
    <interactant intactId="EBI-9640259">
        <id>P02671-2</id>
        <label>FGA</label>
    </interactant>
    <organismsDiffer>false</organismsDiffer>
    <experiments>3</experiments>
</comment>
<comment type="interaction">
    <interactant intactId="EBI-1105213">
        <id>Q9UBB9</id>
    </interactant>
    <interactant intactId="EBI-372506">
        <id>Q8TAE8</id>
        <label>GADD45GIP1</label>
    </interactant>
    <organismsDiffer>false</organismsDiffer>
    <experiments>3</experiments>
</comment>
<comment type="interaction">
    <interactant intactId="EBI-1105213">
        <id>Q9UBB9</id>
    </interactant>
    <interactant intactId="EBI-7960826">
        <id>Q8NHY3</id>
        <label>GAS2L2</label>
    </interactant>
    <organismsDiffer>false</organismsDiffer>
    <experiments>3</experiments>
</comment>
<comment type="interaction">
    <interactant intactId="EBI-1105213">
        <id>Q9UBB9</id>
    </interactant>
    <interactant intactId="EBI-746252">
        <id>Q96CN9</id>
        <label>GCC1</label>
    </interactant>
    <organismsDiffer>false</organismsDiffer>
    <experiments>3</experiments>
</comment>
<comment type="interaction">
    <interactant intactId="EBI-1105213">
        <id>Q9UBB9</id>
    </interactant>
    <interactant intactId="EBI-954074">
        <id>P16383</id>
        <label>GCFC2</label>
    </interactant>
    <organismsDiffer>false</organismsDiffer>
    <experiments>5</experiments>
</comment>
<comment type="interaction">
    <interactant intactId="EBI-1105213">
        <id>Q9UBB9</id>
    </interactant>
    <interactant intactId="EBI-744104">
        <id>P55040</id>
        <label>GEM</label>
    </interactant>
    <organismsDiffer>false</organismsDiffer>
    <experiments>7</experiments>
</comment>
<comment type="interaction">
    <interactant intactId="EBI-1105213">
        <id>Q9UBB9</id>
    </interactant>
    <interactant intactId="EBI-744302">
        <id>P14136</id>
        <label>GFAP</label>
    </interactant>
    <organismsDiffer>false</organismsDiffer>
    <experiments>3</experiments>
</comment>
<comment type="interaction">
    <interactant intactId="EBI-1105213">
        <id>Q9UBB9</id>
    </interactant>
    <interactant intactId="EBI-10175453">
        <id>B1APZ0</id>
        <label>GNG4</label>
    </interactant>
    <organismsDiffer>false</organismsDiffer>
    <experiments>3</experiments>
</comment>
<comment type="interaction">
    <interactant intactId="EBI-1105213">
        <id>Q9UBB9</id>
    </interactant>
    <interactant intactId="EBI-6164177">
        <id>Q92805</id>
        <label>GOLGA1</label>
    </interactant>
    <organismsDiffer>false</organismsDiffer>
    <experiments>6</experiments>
</comment>
<comment type="interaction">
    <interactant intactId="EBI-1105213">
        <id>Q9UBB9</id>
    </interactant>
    <interactant intactId="EBI-713355">
        <id>Q13227</id>
        <label>GPS2</label>
    </interactant>
    <organismsDiffer>false</organismsDiffer>
    <experiments>6</experiments>
</comment>
<comment type="interaction">
    <interactant intactId="EBI-1105213">
        <id>Q9UBB9</id>
    </interactant>
    <interactant intactId="EBI-372619">
        <id>Q14687</id>
        <label>GSE1</label>
    </interactant>
    <organismsDiffer>false</organismsDiffer>
    <experiments>3</experiments>
</comment>
<comment type="interaction">
    <interactant intactId="EBI-1105213">
        <id>Q9UBB9</id>
    </interactant>
    <interactant intactId="EBI-2514791">
        <id>Q96CS2</id>
        <label>HAUS1</label>
    </interactant>
    <organismsDiffer>false</organismsDiffer>
    <experiments>3</experiments>
</comment>
<comment type="interaction">
    <interactant intactId="EBI-1105213">
        <id>Q9UBB9</id>
    </interactant>
    <interactant intactId="EBI-11953488">
        <id>P56524-2</id>
        <label>HDAC4</label>
    </interactant>
    <organismsDiffer>false</organismsDiffer>
    <experiments>3</experiments>
</comment>
<comment type="interaction">
    <interactant intactId="EBI-1105213">
        <id>Q9UBB9</id>
    </interactant>
    <interactant intactId="EBI-12292427">
        <id>O75146-2</id>
        <label>HIP1R</label>
    </interactant>
    <organismsDiffer>false</organismsDiffer>
    <experiments>3</experiments>
</comment>
<comment type="interaction">
    <interactant intactId="EBI-1105213">
        <id>Q9UBB9</id>
    </interactant>
    <interactant intactId="EBI-713401">
        <id>Q9P0W2</id>
        <label>HMG20B</label>
    </interactant>
    <organismsDiffer>false</organismsDiffer>
    <experiments>3</experiments>
</comment>
<comment type="interaction">
    <interactant intactId="EBI-1105213">
        <id>Q9UBB9</id>
    </interactant>
    <interactant intactId="EBI-746704">
        <id>Q9UJC3</id>
        <label>HOOK1</label>
    </interactant>
    <organismsDiffer>false</organismsDiffer>
    <experiments>8</experiments>
</comment>
<comment type="interaction">
    <interactant intactId="EBI-1105213">
        <id>Q9UBB9</id>
    </interactant>
    <interactant intactId="EBI-7116203">
        <id>O75031</id>
        <label>HSF2BP</label>
    </interactant>
    <organismsDiffer>false</organismsDiffer>
    <experiments>3</experiments>
</comment>
<comment type="interaction">
    <interactant intactId="EBI-1105213">
        <id>Q9UBB9</id>
    </interactant>
    <interactant intactId="EBI-2557212">
        <id>Q70UQ0</id>
        <label>IKBIP</label>
    </interactant>
    <organismsDiffer>false</organismsDiffer>
    <experiments>3</experiments>
</comment>
<comment type="interaction">
    <interactant intactId="EBI-1105213">
        <id>Q9UBB9</id>
    </interactant>
    <interactant intactId="EBI-17178971">
        <id>Q14005-2</id>
        <label>IL16</label>
    </interactant>
    <organismsDiffer>false</organismsDiffer>
    <experiments>3</experiments>
</comment>
<comment type="interaction">
    <interactant intactId="EBI-1105213">
        <id>Q9UBB9</id>
    </interactant>
    <interactant intactId="EBI-747481">
        <id>Q9NV31</id>
        <label>IMP3</label>
    </interactant>
    <organismsDiffer>false</organismsDiffer>
    <experiments>4</experiments>
</comment>
<comment type="interaction">
    <interactant intactId="EBI-1105213">
        <id>Q9UBB9</id>
    </interactant>
    <interactant intactId="EBI-17181882">
        <id>O75564-2</id>
        <label>JRK</label>
    </interactant>
    <organismsDiffer>false</organismsDiffer>
    <experiments>3</experiments>
</comment>
<comment type="interaction">
    <interactant intactId="EBI-1105213">
        <id>Q9UBB9</id>
    </interactant>
    <interactant intactId="EBI-2556193">
        <id>Q63ZY3</id>
        <label>KANK2</label>
    </interactant>
    <organismsDiffer>false</organismsDiffer>
    <experiments>3</experiments>
</comment>
<comment type="interaction">
    <interactant intactId="EBI-1105213">
        <id>Q9UBB9</id>
    </interactant>
    <interactant intactId="EBI-740244">
        <id>Q7Z3B3</id>
        <label>KANSL1</label>
    </interactant>
    <organismsDiffer>false</organismsDiffer>
    <experiments>5</experiments>
</comment>
<comment type="interaction">
    <interactant intactId="EBI-1105213">
        <id>Q9UBB9</id>
    </interactant>
    <interactant intactId="EBI-399080">
        <id>Q92993</id>
        <label>KAT5</label>
    </interactant>
    <organismsDiffer>false</organismsDiffer>
    <experiments>3</experiments>
</comment>
<comment type="interaction">
    <interactant intactId="EBI-1105213">
        <id>Q9UBB9</id>
    </interactant>
    <interactant intactId="EBI-710124">
        <id>O60341</id>
        <label>KDM1A</label>
    </interactant>
    <organismsDiffer>false</organismsDiffer>
    <experiments>3</experiments>
</comment>
<comment type="interaction">
    <interactant intactId="EBI-1105213">
        <id>Q9UBB9</id>
    </interactant>
    <interactant intactId="EBI-1104854">
        <id>O14782</id>
        <label>KIF3C</label>
    </interactant>
    <organismsDiffer>false</organismsDiffer>
    <experiments>3</experiments>
</comment>
<comment type="interaction">
    <interactant intactId="EBI-1105213">
        <id>Q9UBB9</id>
    </interactant>
    <interactant intactId="EBI-8472129">
        <id>Q9HAQ2</id>
        <label>KIF9</label>
    </interactant>
    <organismsDiffer>false</organismsDiffer>
    <experiments>3</experiments>
</comment>
<comment type="interaction">
    <interactant intactId="EBI-1105213">
        <id>Q9UBB9</id>
    </interactant>
    <interactant intactId="EBI-14069005">
        <id>Q9BVG8-5</id>
        <label>KIFC3</label>
    </interactant>
    <organismsDiffer>false</organismsDiffer>
    <experiments>3</experiments>
</comment>
<comment type="interaction">
    <interactant intactId="EBI-1105213">
        <id>Q9UBB9</id>
    </interactant>
    <interactant intactId="EBI-2554344">
        <id>Q2M2Z5</id>
        <label>KIZ</label>
    </interactant>
    <organismsDiffer>false</organismsDiffer>
    <experiments>3</experiments>
</comment>
<comment type="interaction">
    <interactant intactId="EBI-1105213">
        <id>Q9UBB9</id>
    </interactant>
    <interactant intactId="EBI-298429">
        <id>P04264</id>
        <label>KRT1</label>
    </interactant>
    <organismsDiffer>false</organismsDiffer>
    <experiments>3</experiments>
</comment>
<comment type="interaction">
    <interactant intactId="EBI-1105213">
        <id>Q9UBB9</id>
    </interactant>
    <interactant intactId="EBI-742094">
        <id>P35900</id>
        <label>KRT20</label>
    </interactant>
    <organismsDiffer>false</organismsDiffer>
    <experiments>7</experiments>
</comment>
<comment type="interaction">
    <interactant intactId="EBI-1105213">
        <id>Q9UBB9</id>
    </interactant>
    <interactant intactId="EBI-702198">
        <id>P02538</id>
        <label>KRT6A</label>
    </interactant>
    <organismsDiffer>false</organismsDiffer>
    <experiments>10</experiments>
</comment>
<comment type="interaction">
    <interactant intactId="EBI-1105213">
        <id>Q9UBB9</id>
    </interactant>
    <interactant intactId="EBI-740907">
        <id>P04259</id>
        <label>KRT6B</label>
    </interactant>
    <organismsDiffer>false</organismsDiffer>
    <experiments>6</experiments>
</comment>
<comment type="interaction">
    <interactant intactId="EBI-1105213">
        <id>Q9UBB9</id>
    </interactant>
    <interactant intactId="EBI-2564105">
        <id>P48668</id>
        <label>KRT6C</label>
    </interactant>
    <organismsDiffer>false</organismsDiffer>
    <experiments>3</experiments>
</comment>
<comment type="interaction">
    <interactant intactId="EBI-1105213">
        <id>Q9UBB9</id>
    </interactant>
    <interactant intactId="EBI-297852">
        <id>P05787</id>
        <label>KRT8</label>
    </interactant>
    <organismsDiffer>false</organismsDiffer>
    <experiments>3</experiments>
</comment>
<comment type="interaction">
    <interactant intactId="EBI-1105213">
        <id>Q9UBB9</id>
    </interactant>
    <interactant intactId="EBI-10253976">
        <id>Q6PJG3</id>
        <label>LATS1</label>
    </interactant>
    <organismsDiffer>false</organismsDiffer>
    <experiments>3</experiments>
</comment>
<comment type="interaction">
    <interactant intactId="EBI-1105213">
        <id>Q9UBB9</id>
    </interactant>
    <interactant intactId="EBI-6658186">
        <id>Q86VQ0</id>
        <label>LCA5</label>
    </interactant>
    <organismsDiffer>false</organismsDiffer>
    <experiments>4</experiments>
</comment>
<comment type="interaction">
    <interactant intactId="EBI-1105213">
        <id>Q9UBB9</id>
    </interactant>
    <interactant intactId="EBI-8473670">
        <id>O95447</id>
        <label>LCA5L</label>
    </interactant>
    <organismsDiffer>false</organismsDiffer>
    <experiments>6</experiments>
</comment>
<comment type="interaction">
    <interactant intactId="EBI-1105213">
        <id>Q9UBB9</id>
    </interactant>
    <interactant intactId="EBI-726510">
        <id>Q96BZ8</id>
        <label>LENG1</label>
    </interactant>
    <organismsDiffer>false</organismsDiffer>
    <experiments>3</experiments>
</comment>
<comment type="interaction">
    <interactant intactId="EBI-1105213">
        <id>Q9UBB9</id>
    </interactant>
    <interactant intactId="EBI-748884">
        <id>Q96GY3</id>
        <label>LIN37</label>
    </interactant>
    <organismsDiffer>false</organismsDiffer>
    <experiments>3</experiments>
</comment>
<comment type="interaction">
    <interactant intactId="EBI-1105213">
        <id>Q9UBB9</id>
    </interactant>
    <interactant intactId="EBI-2830427">
        <id>Q03252</id>
        <label>LMNB2</label>
    </interactant>
    <organismsDiffer>false</organismsDiffer>
    <experiments>3</experiments>
</comment>
<comment type="interaction">
    <interactant intactId="EBI-1105213">
        <id>Q9UBB9</id>
    </interactant>
    <interactant intactId="EBI-8639312">
        <id>P25800</id>
        <label>LMO1</label>
    </interactant>
    <organismsDiffer>false</organismsDiffer>
    <experiments>7</experiments>
</comment>
<comment type="interaction">
    <interactant intactId="EBI-1105213">
        <id>Q9UBB9</id>
    </interactant>
    <interactant intactId="EBI-11959475">
        <id>P25791-3</id>
        <label>LMO2</label>
    </interactant>
    <organismsDiffer>false</organismsDiffer>
    <experiments>3</experiments>
</comment>
<comment type="interaction">
    <interactant intactId="EBI-1105213">
        <id>Q9UBB9</id>
    </interactant>
    <interactant intactId="EBI-2798728">
        <id>P61968</id>
        <label>LMO4</label>
    </interactant>
    <organismsDiffer>false</organismsDiffer>
    <experiments>6</experiments>
</comment>
<comment type="interaction">
    <interactant intactId="EBI-1105213">
        <id>Q9UBB9</id>
    </interactant>
    <interactant intactId="EBI-10226726">
        <id>Q0VAF8</id>
        <label>LOC729862</label>
    </interactant>
    <organismsDiffer>false</organismsDiffer>
    <experiments>3</experiments>
</comment>
<comment type="interaction">
    <interactant intactId="EBI-1105213">
        <id>Q9UBB9</id>
    </interactant>
    <interactant intactId="EBI-10226748">
        <id>Q0VAF9</id>
        <label>LOC729862</label>
    </interactant>
    <organismsDiffer>false</organismsDiffer>
    <experiments>3</experiments>
</comment>
<comment type="interaction">
    <interactant intactId="EBI-1105213">
        <id>Q9UBB9</id>
    </interactant>
    <interactant intactId="EBI-348239">
        <id>P62310</id>
        <label>LSM3</label>
    </interactant>
    <organismsDiffer>false</organismsDiffer>
    <experiments>3</experiments>
</comment>
<comment type="interaction">
    <interactant intactId="EBI-1105213">
        <id>Q9UBB9</id>
    </interactant>
    <interactant intactId="EBI-10293291">
        <id>Q96S90</id>
        <label>LYSMD1</label>
    </interactant>
    <organismsDiffer>false</organismsDiffer>
    <experiments>3</experiments>
</comment>
<comment type="interaction">
    <interactant intactId="EBI-1105213">
        <id>Q9UBB9</id>
    </interactant>
    <interactant intactId="EBI-6659161">
        <id>Q9Y586</id>
        <label>MAB21L2</label>
    </interactant>
    <organismsDiffer>false</organismsDiffer>
    <experiments>3</experiments>
</comment>
<comment type="interaction">
    <interactant intactId="EBI-1105213">
        <id>Q9UBB9</id>
    </interactant>
    <interactant intactId="EBI-749353">
        <id>Q9H7H0</id>
        <label>METTL17</label>
    </interactant>
    <organismsDiffer>false</organismsDiffer>
    <experiments>5</experiments>
</comment>
<comment type="interaction">
    <interactant intactId="EBI-1105213">
        <id>Q9UBB9</id>
    </interactant>
    <interactant intactId="EBI-1048159">
        <id>P55081</id>
        <label>MFAP1</label>
    </interactant>
    <organismsDiffer>false</organismsDiffer>
    <experiments>3</experiments>
</comment>
<comment type="interaction">
    <interactant intactId="EBI-1105213">
        <id>Q9UBB9</id>
    </interactant>
    <interactant intactId="EBI-14086479">
        <id>Q8IVT4</id>
        <label>MGC50722</label>
    </interactant>
    <organismsDiffer>false</organismsDiffer>
    <experiments>3</experiments>
</comment>
<comment type="interaction">
    <interactant intactId="EBI-1105213">
        <id>Q9UBB9</id>
    </interactant>
    <interactant intactId="EBI-2340269">
        <id>Q13064</id>
        <label>MKRN3</label>
    </interactant>
    <organismsDiffer>false</organismsDiffer>
    <experiments>3</experiments>
</comment>
<comment type="interaction">
    <interactant intactId="EBI-1105213">
        <id>Q9UBB9</id>
    </interactant>
    <interactant intactId="EBI-5453723">
        <id>Q9Y3B7</id>
        <label>MRPL11</label>
    </interactant>
    <organismsDiffer>false</organismsDiffer>
    <experiments>3</experiments>
</comment>
<comment type="interaction">
    <interactant intactId="EBI-1105213">
        <id>Q9UBB9</id>
    </interactant>
    <interactant intactId="EBI-14083835">
        <id>O94964-4</id>
        <label>MTCL2</label>
    </interactant>
    <organismsDiffer>false</organismsDiffer>
    <experiments>3</experiments>
</comment>
<comment type="interaction">
    <interactant intactId="EBI-1105213">
        <id>Q9UBB9</id>
    </interactant>
    <interactant intactId="EBI-10252703">
        <id>Q6P444</id>
        <label>MTFR2</label>
    </interactant>
    <organismsDiffer>false</organismsDiffer>
    <experiments>3</experiments>
</comment>
<comment type="interaction">
    <interactant intactId="EBI-1105213">
        <id>Q9UBB9</id>
    </interactant>
    <interactant intactId="EBI-741574">
        <id>Q9BW11</id>
        <label>MXD3</label>
    </interactant>
    <organismsDiffer>false</organismsDiffer>
    <experiments>4</experiments>
</comment>
<comment type="interaction">
    <interactant intactId="EBI-1105213">
        <id>Q9UBB9</id>
    </interactant>
    <interactant intactId="EBI-7950783">
        <id>Q96JP2</id>
        <label>MYO15B</label>
    </interactant>
    <organismsDiffer>false</organismsDiffer>
    <experiments>3</experiments>
</comment>
<comment type="interaction">
    <interactant intactId="EBI-1105213">
        <id>Q9UBB9</id>
    </interactant>
    <interactant intactId="EBI-12010196">
        <id>P52179-2</id>
        <label>MYOM1</label>
    </interactant>
    <organismsDiffer>false</organismsDiffer>
    <experiments>3</experiments>
</comment>
<comment type="interaction">
    <interactant intactId="EBI-1105213">
        <id>Q9UBB9</id>
    </interactant>
    <interactant intactId="EBI-715849">
        <id>O14777</id>
        <label>NDC80</label>
    </interactant>
    <organismsDiffer>false</organismsDiffer>
    <experiments>6</experiments>
</comment>
<comment type="interaction">
    <interactant intactId="EBI-1105213">
        <id>Q9UBB9</id>
    </interactant>
    <interactant intactId="EBI-11750983">
        <id>Q9HC98-4</id>
        <label>NEK6</label>
    </interactant>
    <organismsDiffer>false</organismsDiffer>
    <experiments>3</experiments>
</comment>
<comment type="interaction">
    <interactant intactId="EBI-1105213">
        <id>Q9UBB9</id>
    </interactant>
    <interactant intactId="EBI-10271199">
        <id>Q8NI38</id>
        <label>NFKBID</label>
    </interactant>
    <organismsDiffer>false</organismsDiffer>
    <experiments>3</experiments>
</comment>
<comment type="interaction">
    <interactant intactId="EBI-1105213">
        <id>Q9UBB9</id>
    </interactant>
    <interactant intactId="EBI-725252">
        <id>Q9UMS0</id>
        <label>NFU1</label>
    </interactant>
    <organismsDiffer>false</organismsDiffer>
    <experiments>6</experiments>
</comment>
<comment type="interaction">
    <interactant intactId="EBI-1105213">
        <id>Q9UBB9</id>
    </interactant>
    <interactant intactId="EBI-12028784">
        <id>Q6X4W1-2</id>
        <label>NSMF</label>
    </interactant>
    <organismsDiffer>false</organismsDiffer>
    <experiments>3</experiments>
</comment>
<comment type="interaction">
    <interactant intactId="EBI-1105213">
        <id>Q9UBB9</id>
    </interactant>
    <interactant intactId="EBI-726178">
        <id>Q99567</id>
        <label>NUP88</label>
    </interactant>
    <organismsDiffer>false</organismsDiffer>
    <experiments>3</experiments>
</comment>
<comment type="interaction">
    <interactant intactId="EBI-1105213">
        <id>Q9UBB9</id>
    </interactant>
    <interactant intactId="EBI-8466445">
        <id>A5D8V7</id>
        <label>ODAD3</label>
    </interactant>
    <organismsDiffer>false</organismsDiffer>
    <experiments>6</experiments>
</comment>
<comment type="interaction">
    <interactant intactId="EBI-1105213">
        <id>Q9UBB9</id>
    </interactant>
    <interactant intactId="EBI-10173824">
        <id>A5D8V7-2</id>
        <label>ODAD3</label>
    </interactant>
    <organismsDiffer>false</organismsDiffer>
    <experiments>3</experiments>
</comment>
<comment type="interaction">
    <interactant intactId="EBI-1105213">
        <id>Q9UBB9</id>
    </interactant>
    <interactant intactId="EBI-536879">
        <id>O43482</id>
        <label>OIP5</label>
    </interactant>
    <organismsDiffer>false</organismsDiffer>
    <experiments>6</experiments>
</comment>
<comment type="interaction">
    <interactant intactId="EBI-1105213">
        <id>Q9UBB9</id>
    </interactant>
    <interactant intactId="EBI-741171">
        <id>Q96AL5</id>
        <label>PBX3</label>
    </interactant>
    <organismsDiffer>false</organismsDiffer>
    <experiments>3</experiments>
</comment>
<comment type="interaction">
    <interactant intactId="EBI-1105213">
        <id>Q9UBB9</id>
    </interactant>
    <interactant intactId="EBI-10302990">
        <id>Q9BYU1</id>
        <label>PBX4</label>
    </interactant>
    <organismsDiffer>false</organismsDiffer>
    <experiments>9</experiments>
</comment>
<comment type="interaction">
    <interactant intactId="EBI-1105213">
        <id>Q9UBB9</id>
    </interactant>
    <interactant intactId="EBI-10240575">
        <id>Q8TBR0</id>
        <label>PDE4DIP</label>
    </interactant>
    <organismsDiffer>false</organismsDiffer>
    <experiments>3</experiments>
</comment>
<comment type="interaction">
    <interactant intactId="EBI-1105213">
        <id>Q9UBB9</id>
    </interactant>
    <interactant intactId="EBI-530034">
        <id>O43189</id>
        <label>PHF1</label>
    </interactant>
    <organismsDiffer>false</organismsDiffer>
    <experiments>3</experiments>
</comment>
<comment type="interaction">
    <interactant intactId="EBI-1105213">
        <id>Q9UBB9</id>
    </interactant>
    <interactant intactId="EBI-14066006">
        <id>Q4G0R1</id>
        <label>PIBF1</label>
    </interactant>
    <organismsDiffer>false</organismsDiffer>
    <experiments>3</experiments>
</comment>
<comment type="interaction">
    <interactant intactId="EBI-1105213">
        <id>Q9UBB9</id>
    </interactant>
    <interactant intactId="EBI-79165">
        <id>Q9NRD5</id>
        <label>PICK1</label>
    </interactant>
    <organismsDiffer>false</organismsDiffer>
    <experiments>3</experiments>
</comment>
<comment type="interaction">
    <interactant intactId="EBI-1105213">
        <id>Q9UBB9</id>
    </interactant>
    <interactant intactId="EBI-1384335">
        <id>Q6P5Z2</id>
        <label>PKN3</label>
    </interactant>
    <organismsDiffer>false</organismsDiffer>
    <experiments>3</experiments>
</comment>
<comment type="interaction">
    <interactant intactId="EBI-1105213">
        <id>Q9UBB9</id>
    </interactant>
    <interactant intactId="EBI-746202">
        <id>O00444</id>
        <label>PLK4</label>
    </interactant>
    <organismsDiffer>false</organismsDiffer>
    <experiments>3</experiments>
</comment>
<comment type="interaction">
    <interactant intactId="EBI-1105213">
        <id>Q9UBB9</id>
    </interactant>
    <interactant intactId="EBI-10320765">
        <id>Q9UGP5-2</id>
        <label>POLL</label>
    </interactant>
    <organismsDiffer>false</organismsDiffer>
    <experiments>3</experiments>
</comment>
<comment type="interaction">
    <interactant intactId="EBI-1105213">
        <id>Q9UBB9</id>
    </interactant>
    <interactant intactId="EBI-1055079">
        <id>O15160</id>
        <label>POLR1C</label>
    </interactant>
    <organismsDiffer>false</organismsDiffer>
    <experiments>5</experiments>
</comment>
<comment type="interaction">
    <interactant intactId="EBI-1105213">
        <id>Q9UBB9</id>
    </interactant>
    <interactant intactId="EBI-11956563">
        <id>Q96HA1-2</id>
        <label>POM121</label>
    </interactant>
    <organismsDiffer>false</organismsDiffer>
    <experiments>3</experiments>
</comment>
<comment type="interaction">
    <interactant intactId="EBI-1105213">
        <id>Q9UBB9</id>
    </interactant>
    <interactant intactId="EBI-1763225">
        <id>O75145</id>
        <label>PPFIA3</label>
    </interactant>
    <organismsDiffer>false</organismsDiffer>
    <experiments>3</experiments>
</comment>
<comment type="interaction">
    <interactant intactId="EBI-1105213">
        <id>Q9UBB9</id>
    </interactant>
    <interactant intactId="EBI-2557469">
        <id>Q6NYC8</id>
        <label>PPP1R18</label>
    </interactant>
    <organismsDiffer>false</organismsDiffer>
    <experiments>3</experiments>
</comment>
<comment type="interaction">
    <interactant intactId="EBI-1105213">
        <id>Q9UBB9</id>
    </interactant>
    <interactant intactId="EBI-1567797">
        <id>Q8WWY3</id>
        <label>PRPF31</label>
    </interactant>
    <organismsDiffer>false</organismsDiffer>
    <experiments>12</experiments>
</comment>
<comment type="interaction">
    <interactant intactId="EBI-1105213">
        <id>Q9UBB9</id>
    </interactant>
    <interactant intactId="EBI-359310">
        <id>P25789</id>
        <label>PSMA4</label>
    </interactant>
    <organismsDiffer>false</organismsDiffer>
    <experiments>3</experiments>
</comment>
<comment type="interaction">
    <interactant intactId="EBI-1105213">
        <id>Q9UBB9</id>
    </interactant>
    <interactant intactId="EBI-357745">
        <id>P62195</id>
        <label>PSMC5</label>
    </interactant>
    <organismsDiffer>false</organismsDiffer>
    <experiments>3</experiments>
</comment>
<comment type="interaction">
    <interactant intactId="EBI-1105213">
        <id>Q9UBB9</id>
    </interactant>
    <interactant intactId="EBI-16430249">
        <id>A0A0S2Z528</id>
        <label>PSTPIP1</label>
    </interactant>
    <organismsDiffer>false</organismsDiffer>
    <experiments>3</experiments>
</comment>
<comment type="interaction">
    <interactant intactId="EBI-1105213">
        <id>Q9UBB9</id>
    </interactant>
    <interactant intactId="EBI-2560233">
        <id>O75127</id>
        <label>PTCD1</label>
    </interactant>
    <organismsDiffer>false</organismsDiffer>
    <experiments>3</experiments>
</comment>
<comment type="interaction">
    <interactant intactId="EBI-1105213">
        <id>Q9UBB9</id>
    </interactant>
    <interactant intactId="EBI-743428">
        <id>Q9P2K3</id>
        <label>RCOR3</label>
    </interactant>
    <organismsDiffer>false</organismsDiffer>
    <experiments>3</experiments>
</comment>
<comment type="interaction">
    <interactant intactId="EBI-1105213">
        <id>Q9UBB9</id>
    </interactant>
    <interactant intactId="EBI-9658624">
        <id>Q9BSD3</id>
        <label>RHNO1</label>
    </interactant>
    <organismsDiffer>false</organismsDiffer>
    <experiments>6</experiments>
</comment>
<comment type="interaction">
    <interactant intactId="EBI-1105213">
        <id>Q9UBB9</id>
    </interactant>
    <interactant intactId="EBI-366017">
        <id>Q13671</id>
        <label>RIN1</label>
    </interactant>
    <organismsDiffer>false</organismsDiffer>
    <experiments>3</experiments>
</comment>
<comment type="interaction">
    <interactant intactId="EBI-1105213">
        <id>Q9UBB9</id>
    </interactant>
    <interactant intactId="EBI-16428950">
        <id>A0A0S2Z4G9</id>
        <label>RNF6</label>
    </interactant>
    <organismsDiffer>false</organismsDiffer>
    <experiments>3</experiments>
</comment>
<comment type="interaction">
    <interactant intactId="EBI-1105213">
        <id>Q9UBB9</id>
    </interactant>
    <interactant intactId="EBI-7223720">
        <id>Q9Y3A4</id>
        <label>RRP7A</label>
    </interactant>
    <organismsDiffer>false</organismsDiffer>
    <experiments>5</experiments>
</comment>
<comment type="interaction">
    <interactant intactId="EBI-1105213">
        <id>Q9UBB9</id>
    </interactant>
    <interactant intactId="EBI-11984663">
        <id>Q06455-2</id>
        <label>RUNX1T1</label>
    </interactant>
    <organismsDiffer>false</organismsDiffer>
    <experiments>3</experiments>
</comment>
<comment type="interaction">
    <interactant intactId="EBI-1105213">
        <id>Q9UBB9</id>
    </interactant>
    <interactant intactId="EBI-16429492">
        <id>P28702-3</id>
        <label>RXRB</label>
    </interactant>
    <organismsDiffer>false</organismsDiffer>
    <experiments>3</experiments>
</comment>
<comment type="interaction">
    <interactant intactId="EBI-1105213">
        <id>Q9UBB9</id>
    </interactant>
    <interactant intactId="EBI-743700">
        <id>P25815</id>
        <label>S100P</label>
    </interactant>
    <organismsDiffer>false</organismsDiffer>
    <experiments>3</experiments>
</comment>
<comment type="interaction">
    <interactant intactId="EBI-1105213">
        <id>Q9UBB9</id>
    </interactant>
    <interactant intactId="EBI-751683">
        <id>Q9UHR5</id>
        <label>SAP30BP</label>
    </interactant>
    <organismsDiffer>false</organismsDiffer>
    <experiments>4</experiments>
</comment>
<comment type="interaction">
    <interactant intactId="EBI-1105213">
        <id>Q9UBB9</id>
    </interactant>
    <interactant intactId="EBI-748391">
        <id>Q9BWG6</id>
        <label>SCNM1</label>
    </interactant>
    <organismsDiffer>false</organismsDiffer>
    <experiments>5</experiments>
</comment>
<comment type="interaction">
    <interactant intactId="EBI-1105213">
        <id>Q9UBB9</id>
    </interactant>
    <interactant intactId="EBI-1104535">
        <id>Q86XK3</id>
        <label>SFR1</label>
    </interactant>
    <organismsDiffer>false</organismsDiffer>
    <experiments>4</experiments>
</comment>
<comment type="interaction">
    <interactant intactId="EBI-1105213">
        <id>Q9UBB9</id>
    </interactant>
    <interactant intactId="EBI-743117">
        <id>Q96ES7</id>
        <label>SGF29</label>
    </interactant>
    <organismsDiffer>false</organismsDiffer>
    <experiments>3</experiments>
</comment>
<comment type="interaction">
    <interactant intactId="EBI-1105213">
        <id>Q9UBB9</id>
    </interactant>
    <interactant intactId="EBI-747035">
        <id>Q9H788</id>
        <label>SH2D4A</label>
    </interactant>
    <organismsDiffer>false</organismsDiffer>
    <experiments>8</experiments>
</comment>
<comment type="interaction">
    <interactant intactId="EBI-1105213">
        <id>Q9UBB9</id>
    </interactant>
    <interactant intactId="EBI-10308083">
        <id>Q9H788-2</id>
        <label>SH2D4A</label>
    </interactant>
    <organismsDiffer>false</organismsDiffer>
    <experiments>3</experiments>
</comment>
<comment type="interaction">
    <interactant intactId="EBI-1105213">
        <id>Q9UBB9</id>
    </interactant>
    <interactant intactId="EBI-2623095">
        <id>Q9Y371</id>
        <label>SH3GLB1</label>
    </interactant>
    <organismsDiffer>false</organismsDiffer>
    <experiments>7</experiments>
</comment>
<comment type="interaction">
    <interactant intactId="EBI-1105213">
        <id>Q9UBB9</id>
    </interactant>
    <interactant intactId="EBI-455078">
        <id>Q969G3</id>
        <label>SMARCE1</label>
    </interactant>
    <organismsDiffer>false</organismsDiffer>
    <experiments>7</experiments>
</comment>
<comment type="interaction">
    <interactant intactId="EBI-1105213">
        <id>Q9UBB9</id>
    </interactant>
    <interactant intactId="EBI-296723">
        <id>O95295</id>
        <label>SNAPIN</label>
    </interactant>
    <organismsDiffer>false</organismsDiffer>
    <experiments>3</experiments>
</comment>
<comment type="interaction">
    <interactant intactId="EBI-1105213">
        <id>Q9UBB9</id>
    </interactant>
    <interactant intactId="EBI-372475">
        <id>P14678-2</id>
        <label>SNRPB</label>
    </interactant>
    <organismsDiffer>false</organismsDiffer>
    <experiments>6</experiments>
</comment>
<comment type="interaction">
    <interactant intactId="EBI-1105213">
        <id>Q9UBB9</id>
    </interactant>
    <interactant intactId="EBI-632715">
        <id>Q13573</id>
        <label>SNW1</label>
    </interactant>
    <organismsDiffer>false</organismsDiffer>
    <experiments>8</experiments>
</comment>
<comment type="interaction">
    <interactant intactId="EBI-1105213">
        <id>Q9UBB9</id>
    </interactant>
    <interactant intactId="EBI-744896">
        <id>Q7Z614</id>
        <label>SNX20</label>
    </interactant>
    <organismsDiffer>false</organismsDiffer>
    <experiments>4</experiments>
</comment>
<comment type="interaction">
    <interactant intactId="EBI-1105213">
        <id>Q9UBB9</id>
    </interactant>
    <interactant intactId="EBI-8099743">
        <id>Q86XE0</id>
        <label>SNX32</label>
    </interactant>
    <organismsDiffer>false</organismsDiffer>
    <experiments>3</experiments>
</comment>
<comment type="interaction">
    <interactant intactId="EBI-1105213">
        <id>Q9UBB9</id>
    </interactant>
    <interactant intactId="EBI-742688">
        <id>Q9NZD8</id>
        <label>SPG21</label>
    </interactant>
    <organismsDiffer>false</organismsDiffer>
    <experiments>3</experiments>
</comment>
<comment type="interaction">
    <interactant intactId="EBI-1105213">
        <id>Q9UBB9</id>
    </interactant>
    <interactant intactId="EBI-2212028">
        <id>Q9Y2D8</id>
        <label>SSX2IP</label>
    </interactant>
    <organismsDiffer>false</organismsDiffer>
    <experiments>4</experiments>
</comment>
<comment type="interaction">
    <interactant intactId="EBI-1105213">
        <id>Q9UBB9</id>
    </interactant>
    <interactant intactId="EBI-12036261">
        <id>Q7Z7C7</id>
        <label>STRA8</label>
    </interactant>
    <organismsDiffer>false</organismsDiffer>
    <experiments>3</experiments>
</comment>
<comment type="interaction">
    <interactant intactId="EBI-1105213">
        <id>Q9UBB9</id>
    </interactant>
    <interactant intactId="EBI-1046642">
        <id>O43815</id>
        <label>STRN</label>
    </interactant>
    <organismsDiffer>false</organismsDiffer>
    <experiments>3</experiments>
</comment>
<comment type="interaction">
    <interactant intactId="EBI-1105213">
        <id>Q9UBB9</id>
    </interactant>
    <interactant intactId="EBI-17455779">
        <id>Q9Y2I9-2</id>
        <label>TBC1D30</label>
    </interactant>
    <organismsDiffer>false</organismsDiffer>
    <experiments>3</experiments>
</comment>
<comment type="interaction">
    <interactant intactId="EBI-1105213">
        <id>Q9UBB9</id>
    </interactant>
    <interactant intactId="EBI-702328">
        <id>Q969Z0</id>
        <label>TBRG4</label>
    </interactant>
    <organismsDiffer>false</organismsDiffer>
    <experiments>3</experiments>
</comment>
<comment type="interaction">
    <interactant intactId="EBI-1105213">
        <id>Q9UBB9</id>
    </interactant>
    <interactant intactId="EBI-750484">
        <id>Q9Y4C2</id>
        <label>TCAF1</label>
    </interactant>
    <organismsDiffer>false</organismsDiffer>
    <experiments>3</experiments>
</comment>
<comment type="interaction">
    <interactant intactId="EBI-1105213">
        <id>Q9UBB9</id>
    </interactant>
    <interactant intactId="EBI-11974855">
        <id>Q9Y4C2-2</id>
        <label>TCAF1</label>
    </interactant>
    <organismsDiffer>false</organismsDiffer>
    <experiments>3</experiments>
</comment>
<comment type="interaction">
    <interactant intactId="EBI-1105213">
        <id>Q9UBB9</id>
    </interactant>
    <interactant intactId="EBI-1245626">
        <id>P0C1Z6</id>
        <label>TFPT</label>
    </interactant>
    <organismsDiffer>false</organismsDiffer>
    <experiments>5</experiments>
</comment>
<comment type="interaction">
    <interactant intactId="EBI-1105213">
        <id>Q9UBB9</id>
    </interactant>
    <interactant intactId="EBI-10178002">
        <id>P0C1Z6-2</id>
        <label>TFPT</label>
    </interactant>
    <organismsDiffer>false</organismsDiffer>
    <experiments>3</experiments>
</comment>
<comment type="interaction">
    <interactant intactId="EBI-1105213">
        <id>Q9UBB9</id>
    </interactant>
    <interactant intactId="EBI-741350">
        <id>Q9BT49</id>
        <label>THAP7</label>
    </interactant>
    <organismsDiffer>false</organismsDiffer>
    <experiments>7</experiments>
</comment>
<comment type="interaction">
    <interactant intactId="EBI-1105213">
        <id>Q9UBB9</id>
    </interactant>
    <interactant intactId="EBI-717429">
        <id>Q8NA92</id>
        <label>THAP8</label>
    </interactant>
    <organismsDiffer>false</organismsDiffer>
    <experiments>5</experiments>
</comment>
<comment type="interaction">
    <interactant intactId="EBI-1105213">
        <id>Q9UBB9</id>
    </interactant>
    <interactant intactId="EBI-726527">
        <id>P13805</id>
        <label>TNNT1</label>
    </interactant>
    <organismsDiffer>false</organismsDiffer>
    <experiments>4</experiments>
</comment>
<comment type="interaction">
    <interactant intactId="EBI-1105213">
        <id>Q9UBB9</id>
    </interactant>
    <interactant intactId="EBI-765817">
        <id>Q9Y228</id>
        <label>TRAF3IP3</label>
    </interactant>
    <organismsDiffer>false</organismsDiffer>
    <experiments>4</experiments>
</comment>
<comment type="interaction">
    <interactant intactId="EBI-1105213">
        <id>Q9UBB9</id>
    </interactant>
    <interactant intactId="EBI-11993364">
        <id>Q9H8W5-2</id>
        <label>TRIM45</label>
    </interactant>
    <organismsDiffer>false</organismsDiffer>
    <experiments>3</experiments>
</comment>
<comment type="interaction">
    <interactant intactId="EBI-1105213">
        <id>Q9UBB9</id>
    </interactant>
    <interactant intactId="EBI-11059915">
        <id>Q8N7C3</id>
        <label>TRIML2</label>
    </interactant>
    <organismsDiffer>false</organismsDiffer>
    <experiments>3</experiments>
</comment>
<comment type="interaction">
    <interactant intactId="EBI-1105213">
        <id>Q9UBB9</id>
    </interactant>
    <interactant intactId="EBI-346882">
        <id>Q99816</id>
        <label>TSG101</label>
    </interactant>
    <organismsDiffer>false</organismsDiffer>
    <experiments>3</experiments>
</comment>
<comment type="interaction">
    <interactant intactId="EBI-1105213">
        <id>Q9UBB9</id>
    </interactant>
    <interactant intactId="EBI-10241197">
        <id>Q3SY00</id>
        <label>TSGA10IP</label>
    </interactant>
    <organismsDiffer>false</organismsDiffer>
    <experiments>3</experiments>
</comment>
<comment type="interaction">
    <interactant intactId="EBI-1105213">
        <id>Q9UBB9</id>
    </interactant>
    <interactant intactId="EBI-10687282">
        <id>Q9NRE2</id>
        <label>TSHZ2</label>
    </interactant>
    <organismsDiffer>false</organismsDiffer>
    <experiments>3</experiments>
</comment>
<comment type="interaction">
    <interactant intactId="EBI-1105213">
        <id>Q9UBB9</id>
    </interactant>
    <interactant intactId="EBI-9053916">
        <id>Q63HK5</id>
        <label>TSHZ3</label>
    </interactant>
    <organismsDiffer>false</organismsDiffer>
    <experiments>7</experiments>
</comment>
<comment type="interaction">
    <interactant intactId="EBI-1105213">
        <id>Q9UBB9</id>
    </interactant>
    <interactant intactId="EBI-308511">
        <id>Q9UJ04</id>
        <label>TSPYL4</label>
    </interactant>
    <organismsDiffer>false</organismsDiffer>
    <experiments>3</experiments>
</comment>
<comment type="interaction">
    <interactant intactId="EBI-1105213">
        <id>Q9UBB9</id>
    </interactant>
    <interactant intactId="EBI-359793">
        <id>P40222</id>
        <label>TXLNA</label>
    </interactant>
    <organismsDiffer>false</organismsDiffer>
    <experiments>8</experiments>
</comment>
<comment type="interaction">
    <interactant intactId="EBI-1105213">
        <id>Q9UBB9</id>
    </interactant>
    <interactant intactId="EBI-2932492">
        <id>Q99757</id>
        <label>TXN2</label>
    </interactant>
    <organismsDiffer>false</organismsDiffer>
    <experiments>3</experiments>
</comment>
<comment type="interaction">
    <interactant intactId="EBI-1105213">
        <id>Q9UBB9</id>
    </interactant>
    <interactant intactId="EBI-17208936">
        <id>P0CB47</id>
        <label>UBTFL1</label>
    </interactant>
    <organismsDiffer>false</organismsDiffer>
    <experiments>3</experiments>
</comment>
<comment type="interaction">
    <interactant intactId="EBI-1105213">
        <id>Q9UBB9</id>
    </interactant>
    <interactant intactId="EBI-743272">
        <id>O75604</id>
        <label>USP2</label>
    </interactant>
    <organismsDiffer>false</organismsDiffer>
    <experiments>3</experiments>
</comment>
<comment type="interaction">
    <interactant intactId="EBI-1105213">
        <id>Q9UBB9</id>
    </interactant>
    <interactant intactId="EBI-2559305">
        <id>A5D8V6</id>
        <label>VPS37C</label>
    </interactant>
    <organismsDiffer>false</organismsDiffer>
    <experiments>3</experiments>
</comment>
<comment type="interaction">
    <interactant intactId="EBI-1105213">
        <id>Q9UBB9</id>
    </interactant>
    <interactant intactId="EBI-11962886">
        <id>Q96JC1-2</id>
        <label>VPS39</label>
    </interactant>
    <organismsDiffer>false</organismsDiffer>
    <experiments>3</experiments>
</comment>
<comment type="interaction">
    <interactant intactId="EBI-1105213">
        <id>Q9UBB9</id>
    </interactant>
    <interactant intactId="EBI-712969">
        <id>Q9Y3C0</id>
        <label>WASHC3</label>
    </interactant>
    <organismsDiffer>false</organismsDiffer>
    <experiments>3</experiments>
</comment>
<comment type="interaction">
    <interactant intactId="EBI-1105213">
        <id>Q9UBB9</id>
    </interactant>
    <interactant intactId="EBI-740767">
        <id>Q53FD0</id>
        <label>ZC2HC1C</label>
    </interactant>
    <organismsDiffer>false</organismsDiffer>
    <experiments>4</experiments>
</comment>
<comment type="interaction">
    <interactant intactId="EBI-1105213">
        <id>Q9UBB9</id>
    </interactant>
    <interactant intactId="EBI-8656416">
        <id>Q68DK2-5</id>
        <label>ZFYVE26</label>
    </interactant>
    <organismsDiffer>false</organismsDiffer>
    <experiments>3</experiments>
</comment>
<comment type="interaction">
    <interactant intactId="EBI-1105213">
        <id>Q9UBB9</id>
    </interactant>
    <interactant intactId="EBI-16428984">
        <id>A0A0S2Z6H0</id>
        <label>ZGPAT</label>
    </interactant>
    <organismsDiffer>false</organismsDiffer>
    <experiments>3</experiments>
</comment>
<comment type="interaction">
    <interactant intactId="EBI-1105213">
        <id>Q9UBB9</id>
    </interactant>
    <interactant intactId="EBI-3439227">
        <id>Q8N5A5</id>
        <label>ZGPAT</label>
    </interactant>
    <organismsDiffer>false</organismsDiffer>
    <experiments>5</experiments>
</comment>
<comment type="interaction">
    <interactant intactId="EBI-1105213">
        <id>Q9UBB9</id>
    </interactant>
    <interactant intactId="EBI-10183064">
        <id>Q8N5A5-2</id>
        <label>ZGPAT</label>
    </interactant>
    <organismsDiffer>false</organismsDiffer>
    <experiments>9</experiments>
</comment>
<comment type="interaction">
    <interactant intactId="EBI-1105213">
        <id>Q9UBB9</id>
    </interactant>
    <interactant intactId="EBI-2682299">
        <id>Q96NC0</id>
        <label>ZMAT2</label>
    </interactant>
    <organismsDiffer>false</organismsDiffer>
    <experiments>4</experiments>
</comment>
<comment type="interaction">
    <interactant intactId="EBI-1105213">
        <id>Q9UBB9</id>
    </interactant>
    <interactant intactId="EBI-740727">
        <id>Q8TAU3</id>
        <label>ZNF417</label>
    </interactant>
    <organismsDiffer>false</organismsDiffer>
    <experiments>4</experiments>
</comment>
<comment type="interaction">
    <interactant intactId="EBI-1105213">
        <id>Q9UBB9</id>
    </interactant>
    <interactant intactId="EBI-10172590">
        <id>Q7Z3I7</id>
        <label>ZNF572</label>
    </interactant>
    <organismsDiffer>false</organismsDiffer>
    <experiments>3</experiments>
</comment>
<comment type="interaction">
    <interactant intactId="EBI-1105213">
        <id>Q9UBB9</id>
    </interactant>
    <interactant intactId="EBI-6427977">
        <id>Q96SQ5</id>
        <label>ZNF587</label>
    </interactant>
    <organismsDiffer>false</organismsDiffer>
    <experiments>3</experiments>
</comment>
<comment type="interaction">
    <interactant intactId="EBI-1105213">
        <id>Q9UBB9</id>
    </interactant>
    <interactant intactId="EBI-11975599">
        <id>Q9ULD5</id>
        <label>ZNF777</label>
    </interactant>
    <organismsDiffer>false</organismsDiffer>
    <experiments>3</experiments>
</comment>
<comment type="interaction">
    <interactant intactId="EBI-1105213">
        <id>Q9UBB9</id>
    </interactant>
    <interactant intactId="EBI-1210440">
        <id>O43309</id>
        <label>ZSCAN12</label>
    </interactant>
    <organismsDiffer>false</organismsDiffer>
    <experiments>4</experiments>
</comment>
<comment type="subcellular location">
    <subcellularLocation>
        <location evidence="1">Cytoplasm</location>
    </subcellularLocation>
    <subcellularLocation>
        <location evidence="1">Nucleus</location>
    </subcellularLocation>
    <text evidence="1">In the nucleus localizes to unique speckle domains in close proximity to nuclear speckles and not identical to paraspeckles.</text>
</comment>
<comment type="alternative products">
    <event type="alternative splicing"/>
    <isoform>
        <id>Q9UBB9-1</id>
        <name>1</name>
        <sequence type="displayed"/>
    </isoform>
    <isoform>
        <id>Q9UBB9-2</id>
        <name>2</name>
        <sequence type="described" ref="VSP_003998 VSP_003999"/>
    </isoform>
</comment>
<comment type="similarity">
    <text evidence="9">Belongs to the TFP11/STIP family.</text>
</comment>